<sequence length="354" mass="39935">MLFNLRILLNNAAFRNGHNFMVRNFRCGQPLQNKVQLKGRDLLTLKNFTGEEIKYMLWLSADLKFRIKQKGEYLPLLQGKSLGMIFEKRSTRTRLSTETGFALLGGHPCFLTTQDIHLGVNESLTDTARVLSSMADAVLARVYKQSDLDTLAKEASIPIINGLSDLYHPIQILADYLTLQEHYSSLKGLTLSWIGDGNNILHSIMMSAAKFGMHLQAATPKGYEPDASVTKLAEQYAKENGTKLLLTNDPLEAAHGGNVLITDTWISMGQEEEKKKRLQAFQGYQVTMKTAKVAASDWTFLHCLPRKPEEVDDEVFYSPRSLVFPEAENRKWTIMAVMVSLLTDYSPQLQKPKF</sequence>
<comment type="function">
    <text evidence="15 19 26">Catalyzes the second step of the urea cycle, the condensation of carbamoyl phosphate with L-ornithine to form L-citrulline (PubMed:2556444, PubMed:6372096, PubMed:8112735). The urea cycle ensures the detoxification of ammonia by converting it to urea for excretion (PubMed:2556444).</text>
</comment>
<comment type="catalytic activity">
    <reaction evidence="15 19 26">
        <text>carbamoyl phosphate + L-ornithine = L-citrulline + phosphate + H(+)</text>
        <dbReference type="Rhea" id="RHEA:19513"/>
        <dbReference type="ChEBI" id="CHEBI:15378"/>
        <dbReference type="ChEBI" id="CHEBI:43474"/>
        <dbReference type="ChEBI" id="CHEBI:46911"/>
        <dbReference type="ChEBI" id="CHEBI:57743"/>
        <dbReference type="ChEBI" id="CHEBI:58228"/>
        <dbReference type="EC" id="2.1.3.3"/>
    </reaction>
    <physiologicalReaction direction="right-to-left" evidence="46">
        <dbReference type="Rhea" id="RHEA:19515"/>
    </physiologicalReaction>
</comment>
<comment type="activity regulation">
    <text evidence="12">Negatively regulated by lysine acetylation.</text>
</comment>
<comment type="pathway">
    <text evidence="15">Nitrogen metabolism; urea cycle; L-citrulline from L-ornithine and carbamoyl phosphate: step 1/1.</text>
</comment>
<comment type="subunit">
    <text evidence="5 39">Homotrimer.</text>
</comment>
<comment type="subcellular location">
    <subcellularLocation>
        <location evidence="18">Mitochondrion matrix</location>
    </subcellularLocation>
</comment>
<comment type="tissue specificity">
    <text>Mainly expressed in liver and intestinal mucosa.</text>
</comment>
<comment type="PTM">
    <text evidence="12">Acetylation at Lys-88 negatively regulates ornithine carbamoyltransferase activity in response to nutrient signals.</text>
</comment>
<comment type="disease" evidence="2 3 4 6 7 9 11 13 14 15 17 20 21 22 23 24 25 26 27 28 29 30 31 32 33 34 35 36 37 38 40 41">
    <disease id="DI-00883">
        <name>Ornithine carbamoyltransferase deficiency</name>
        <acronym>OTCD</acronym>
        <description>An X-linked disorder of the urea cycle which causes a form of hyperammonemia. Mutations with no residual enzyme activity are always expressed in hemizygote males by a very severe neonatal hyperammonemic coma that generally proves to be fatal. Heterozygous females are either asymptomatic or express orotic aciduria spontaneously or after protein intake. The disorder is treatable with supplemental dietary arginine and low protein diet. The arbitrary classification of patients into the 'neonatal' group (clinical hyperammonemia in the first few days of life) and 'late' onset (clinical presentation after the neonatal period) has been used to differentiate severe from mild forms.</description>
        <dbReference type="MIM" id="311250"/>
    </disease>
    <text>The disease is caused by variants affecting the gene represented in this entry.</text>
</comment>
<comment type="similarity">
    <text evidence="43">Belongs to the aspartate/ornithine carbamoyltransferase superfamily. OTCase family.</text>
</comment>
<keyword id="KW-0002">3D-structure</keyword>
<keyword id="KW-0007">Acetylation</keyword>
<keyword id="KW-0028">Amino-acid biosynthesis</keyword>
<keyword id="KW-0055">Arginine biosynthesis</keyword>
<keyword id="KW-0225">Disease variant</keyword>
<keyword id="KW-0496">Mitochondrion</keyword>
<keyword id="KW-0597">Phosphoprotein</keyword>
<keyword id="KW-1267">Proteomics identification</keyword>
<keyword id="KW-1185">Reference proteome</keyword>
<keyword id="KW-0808">Transferase</keyword>
<keyword id="KW-0809">Transit peptide</keyword>
<keyword id="KW-0835">Urea cycle</keyword>
<evidence type="ECO:0000250" key="1">
    <source>
        <dbReference type="UniProtKB" id="P11725"/>
    </source>
</evidence>
<evidence type="ECO:0000269" key="2">
    <source>
    </source>
</evidence>
<evidence type="ECO:0000269" key="3">
    <source>
    </source>
</evidence>
<evidence type="ECO:0000269" key="4">
    <source>
    </source>
</evidence>
<evidence type="ECO:0000269" key="5">
    <source>
    </source>
</evidence>
<evidence type="ECO:0000269" key="6">
    <source>
    </source>
</evidence>
<evidence type="ECO:0000269" key="7">
    <source>
    </source>
</evidence>
<evidence type="ECO:0000269" key="8">
    <source>
    </source>
</evidence>
<evidence type="ECO:0000269" key="9">
    <source>
    </source>
</evidence>
<evidence type="ECO:0000269" key="10">
    <source>
    </source>
</evidence>
<evidence type="ECO:0000269" key="11">
    <source>
    </source>
</evidence>
<evidence type="ECO:0000269" key="12">
    <source>
    </source>
</evidence>
<evidence type="ECO:0000269" key="13">
    <source>
    </source>
</evidence>
<evidence type="ECO:0000269" key="14">
    <source>
    </source>
</evidence>
<evidence type="ECO:0000269" key="15">
    <source>
    </source>
</evidence>
<evidence type="ECO:0000269" key="16">
    <source>
    </source>
</evidence>
<evidence type="ECO:0000269" key="17">
    <source>
    </source>
</evidence>
<evidence type="ECO:0000269" key="18">
    <source>
    </source>
</evidence>
<evidence type="ECO:0000269" key="19">
    <source>
    </source>
</evidence>
<evidence type="ECO:0000269" key="20">
    <source>
    </source>
</evidence>
<evidence type="ECO:0000269" key="21">
    <source>
    </source>
</evidence>
<evidence type="ECO:0000269" key="22">
    <source>
    </source>
</evidence>
<evidence type="ECO:0000269" key="23">
    <source>
    </source>
</evidence>
<evidence type="ECO:0000269" key="24">
    <source>
    </source>
</evidence>
<evidence type="ECO:0000269" key="25">
    <source>
    </source>
</evidence>
<evidence type="ECO:0000269" key="26">
    <source>
    </source>
</evidence>
<evidence type="ECO:0000269" key="27">
    <source>
    </source>
</evidence>
<evidence type="ECO:0000269" key="28">
    <source>
    </source>
</evidence>
<evidence type="ECO:0000269" key="29">
    <source>
    </source>
</evidence>
<evidence type="ECO:0000269" key="30">
    <source>
    </source>
</evidence>
<evidence type="ECO:0000269" key="31">
    <source>
    </source>
</evidence>
<evidence type="ECO:0000269" key="32">
    <source>
    </source>
</evidence>
<evidence type="ECO:0000269" key="33">
    <source>
    </source>
</evidence>
<evidence type="ECO:0000269" key="34">
    <source>
    </source>
</evidence>
<evidence type="ECO:0000269" key="35">
    <source>
    </source>
</evidence>
<evidence type="ECO:0000269" key="36">
    <source>
    </source>
</evidence>
<evidence type="ECO:0000269" key="37">
    <source>
    </source>
</evidence>
<evidence type="ECO:0000269" key="38">
    <source>
    </source>
</evidence>
<evidence type="ECO:0000269" key="39">
    <source>
    </source>
</evidence>
<evidence type="ECO:0000269" key="40">
    <source ref="32"/>
</evidence>
<evidence type="ECO:0000269" key="41">
    <source ref="43"/>
</evidence>
<evidence type="ECO:0000303" key="42">
    <source>
    </source>
</evidence>
<evidence type="ECO:0000305" key="43"/>
<evidence type="ECO:0000305" key="44">
    <source>
    </source>
</evidence>
<evidence type="ECO:0000305" key="45">
    <source>
    </source>
</evidence>
<evidence type="ECO:0000305" key="46">
    <source>
    </source>
</evidence>
<evidence type="ECO:0000312" key="47">
    <source>
        <dbReference type="HGNC" id="HGNC:8512"/>
    </source>
</evidence>
<evidence type="ECO:0007744" key="48">
    <source>
        <dbReference type="PDB" id="1C9Y"/>
    </source>
</evidence>
<evidence type="ECO:0007744" key="49">
    <source>
        <dbReference type="PDB" id="1OTH"/>
    </source>
</evidence>
<evidence type="ECO:0007744" key="50">
    <source>
    </source>
</evidence>
<evidence type="ECO:0007829" key="51">
    <source>
        <dbReference type="PDB" id="1OTH"/>
    </source>
</evidence>
<accession>P00480</accession>
<accession>A8K9P2</accession>
<accession>D3DWB0</accession>
<accession>Q3KNR1</accession>
<accession>Q6B0I1</accession>
<accession>Q9NYJ5</accession>
<name>OTC_HUMAN</name>
<protein>
    <recommendedName>
        <fullName evidence="45 46">Ornithine transcarbamylase, mitochondrial</fullName>
        <shortName evidence="42">OTCase</shortName>
        <ecNumber evidence="15 19 26">2.1.3.3</ecNumber>
    </recommendedName>
    <alternativeName>
        <fullName>Ornithine carbamoyltransferase, mitochondrial</fullName>
    </alternativeName>
</protein>
<organism>
    <name type="scientific">Homo sapiens</name>
    <name type="common">Human</name>
    <dbReference type="NCBI Taxonomy" id="9606"/>
    <lineage>
        <taxon>Eukaryota</taxon>
        <taxon>Metazoa</taxon>
        <taxon>Chordata</taxon>
        <taxon>Craniata</taxon>
        <taxon>Vertebrata</taxon>
        <taxon>Euteleostomi</taxon>
        <taxon>Mammalia</taxon>
        <taxon>Eutheria</taxon>
        <taxon>Euarchontoglires</taxon>
        <taxon>Primates</taxon>
        <taxon>Haplorrhini</taxon>
        <taxon>Catarrhini</taxon>
        <taxon>Hominidae</taxon>
        <taxon>Homo</taxon>
    </lineage>
</organism>
<gene>
    <name evidence="47" type="primary">OTC</name>
</gene>
<dbReference type="EC" id="2.1.3.3" evidence="15 19 26"/>
<dbReference type="EMBL" id="K02100">
    <property type="protein sequence ID" value="AAA59975.1"/>
    <property type="molecule type" value="mRNA"/>
</dbReference>
<dbReference type="EMBL" id="D00230">
    <property type="protein sequence ID" value="BAA00161.1"/>
    <property type="molecule type" value="Genomic_DNA"/>
</dbReference>
<dbReference type="EMBL" id="AK292757">
    <property type="protein sequence ID" value="BAF85446.1"/>
    <property type="molecule type" value="mRNA"/>
</dbReference>
<dbReference type="EMBL" id="AF241726">
    <property type="status" value="NOT_ANNOTATED_CDS"/>
    <property type="molecule type" value="Genomic_DNA"/>
</dbReference>
<dbReference type="EMBL" id="AL606748">
    <property type="status" value="NOT_ANNOTATED_CDS"/>
    <property type="molecule type" value="Genomic_DNA"/>
</dbReference>
<dbReference type="EMBL" id="AL607040">
    <property type="status" value="NOT_ANNOTATED_CDS"/>
    <property type="molecule type" value="Genomic_DNA"/>
</dbReference>
<dbReference type="EMBL" id="CH471141">
    <property type="protein sequence ID" value="EAW59439.1"/>
    <property type="molecule type" value="Genomic_DNA"/>
</dbReference>
<dbReference type="EMBL" id="CH471141">
    <property type="protein sequence ID" value="EAW59440.1"/>
    <property type="molecule type" value="Genomic_DNA"/>
</dbReference>
<dbReference type="EMBL" id="BC074745">
    <property type="protein sequence ID" value="AAH74745.1"/>
    <property type="molecule type" value="mRNA"/>
</dbReference>
<dbReference type="EMBL" id="BC107153">
    <property type="protein sequence ID" value="AAI07154.1"/>
    <property type="molecule type" value="mRNA"/>
</dbReference>
<dbReference type="EMBL" id="BC107154">
    <property type="protein sequence ID" value="AAI07155.1"/>
    <property type="molecule type" value="mRNA"/>
</dbReference>
<dbReference type="EMBL" id="BC114496">
    <property type="protein sequence ID" value="AAI14497.1"/>
    <property type="molecule type" value="mRNA"/>
</dbReference>
<dbReference type="EMBL" id="M11235">
    <property type="protein sequence ID" value="AAA59976.1"/>
    <property type="molecule type" value="Genomic_DNA"/>
</dbReference>
<dbReference type="EMBL" id="D00095">
    <property type="protein sequence ID" value="BAA00058.1"/>
    <property type="molecule type" value="Genomic_DNA"/>
</dbReference>
<dbReference type="EMBL" id="X04443">
    <property type="protein sequence ID" value="CAA28039.1"/>
    <property type="molecule type" value="Genomic_DNA"/>
</dbReference>
<dbReference type="EMBL" id="S73640">
    <property type="protein sequence ID" value="AAB31859.1"/>
    <property type="molecule type" value="Genomic_DNA"/>
</dbReference>
<dbReference type="CCDS" id="CCDS14247.1"/>
<dbReference type="PIR" id="A41444">
    <property type="entry name" value="OWHU"/>
</dbReference>
<dbReference type="RefSeq" id="NP_000522.3">
    <property type="nucleotide sequence ID" value="NM_000531.5"/>
</dbReference>
<dbReference type="RefSeq" id="NP_001394021.1">
    <property type="nucleotide sequence ID" value="NM_001407092.1"/>
</dbReference>
<dbReference type="PDB" id="1C9Y">
    <property type="method" value="X-ray"/>
    <property type="resolution" value="1.90 A"/>
    <property type="chains" value="A=34-354"/>
</dbReference>
<dbReference type="PDB" id="1EP9">
    <property type="method" value="X-ray"/>
    <property type="resolution" value="2.40 A"/>
    <property type="chains" value="A=34-354"/>
</dbReference>
<dbReference type="PDB" id="1FVO">
    <property type="method" value="X-ray"/>
    <property type="resolution" value="2.60 A"/>
    <property type="chains" value="A/B=34-354"/>
</dbReference>
<dbReference type="PDB" id="1OTH">
    <property type="method" value="X-ray"/>
    <property type="resolution" value="1.85 A"/>
    <property type="chains" value="A=34-354"/>
</dbReference>
<dbReference type="PDBsum" id="1C9Y"/>
<dbReference type="PDBsum" id="1EP9"/>
<dbReference type="PDBsum" id="1FVO"/>
<dbReference type="PDBsum" id="1OTH"/>
<dbReference type="EMDB" id="EMD-35535"/>
<dbReference type="SMR" id="P00480"/>
<dbReference type="BioGRID" id="111050">
    <property type="interactions" value="143"/>
</dbReference>
<dbReference type="FunCoup" id="P00480">
    <property type="interactions" value="154"/>
</dbReference>
<dbReference type="IntAct" id="P00480">
    <property type="interactions" value="13"/>
</dbReference>
<dbReference type="MINT" id="P00480"/>
<dbReference type="STRING" id="9606.ENSP00000039007"/>
<dbReference type="BindingDB" id="P00480"/>
<dbReference type="ChEMBL" id="CHEMBL2222"/>
<dbReference type="DrugBank" id="DB00155">
    <property type="generic name" value="Citrulline"/>
</dbReference>
<dbReference type="DrugBank" id="DB02011">
    <property type="generic name" value="N-(Phosphonoacetyl)-L-Ornithine"/>
</dbReference>
<dbReference type="DrugBank" id="DB04185">
    <property type="generic name" value="Norvaline"/>
</dbReference>
<dbReference type="DrugBank" id="DB00129">
    <property type="generic name" value="Ornithine"/>
</dbReference>
<dbReference type="iPTMnet" id="P00480"/>
<dbReference type="PhosphoSitePlus" id="P00480"/>
<dbReference type="BioMuta" id="OTC"/>
<dbReference type="DMDM" id="84028235"/>
<dbReference type="REPRODUCTION-2DPAGE" id="P00480"/>
<dbReference type="jPOST" id="P00480"/>
<dbReference type="MassIVE" id="P00480"/>
<dbReference type="PaxDb" id="9606-ENSP00000039007"/>
<dbReference type="PeptideAtlas" id="P00480"/>
<dbReference type="ProteomicsDB" id="51254"/>
<dbReference type="Antibodypedia" id="336">
    <property type="antibodies" value="745 antibodies from 30 providers"/>
</dbReference>
<dbReference type="DNASU" id="5009"/>
<dbReference type="Ensembl" id="ENST00000039007.5">
    <property type="protein sequence ID" value="ENSP00000039007.4"/>
    <property type="gene ID" value="ENSG00000036473.9"/>
</dbReference>
<dbReference type="Ensembl" id="ENST00000713758.1">
    <property type="protein sequence ID" value="ENSP00000519059.1"/>
    <property type="gene ID" value="ENSG00000036473.9"/>
</dbReference>
<dbReference type="GeneID" id="5009"/>
<dbReference type="KEGG" id="hsa:5009"/>
<dbReference type="MANE-Select" id="ENST00000039007.5">
    <property type="protein sequence ID" value="ENSP00000039007.4"/>
    <property type="RefSeq nucleotide sequence ID" value="NM_000531.6"/>
    <property type="RefSeq protein sequence ID" value="NP_000522.3"/>
</dbReference>
<dbReference type="UCSC" id="uc004def.5">
    <property type="organism name" value="human"/>
</dbReference>
<dbReference type="AGR" id="HGNC:8512"/>
<dbReference type="CTD" id="5009"/>
<dbReference type="DisGeNET" id="5009"/>
<dbReference type="GeneCards" id="OTC"/>
<dbReference type="GeneReviews" id="OTC"/>
<dbReference type="HGNC" id="HGNC:8512">
    <property type="gene designation" value="OTC"/>
</dbReference>
<dbReference type="HPA" id="ENSG00000036473">
    <property type="expression patterns" value="Group enriched (intestine, liver)"/>
</dbReference>
<dbReference type="MalaCards" id="OTC"/>
<dbReference type="MIM" id="300461">
    <property type="type" value="gene"/>
</dbReference>
<dbReference type="MIM" id="311250">
    <property type="type" value="phenotype"/>
</dbReference>
<dbReference type="neXtProt" id="NX_P00480"/>
<dbReference type="OpenTargets" id="ENSG00000036473"/>
<dbReference type="Orphanet" id="664">
    <property type="disease" value="Ornithine transcarbamylase deficiency"/>
</dbReference>
<dbReference type="PharmGKB" id="PA32840"/>
<dbReference type="VEuPathDB" id="HostDB:ENSG00000036473"/>
<dbReference type="eggNOG" id="KOG1504">
    <property type="taxonomic scope" value="Eukaryota"/>
</dbReference>
<dbReference type="GeneTree" id="ENSGT00510000047417"/>
<dbReference type="HOGENOM" id="CLU_043846_3_0_1"/>
<dbReference type="InParanoid" id="P00480"/>
<dbReference type="OMA" id="DGNNVCN"/>
<dbReference type="OrthoDB" id="10252326at2759"/>
<dbReference type="PAN-GO" id="P00480">
    <property type="GO annotations" value="4 GO annotations based on evolutionary models"/>
</dbReference>
<dbReference type="PhylomeDB" id="P00480"/>
<dbReference type="TreeFam" id="TF352580"/>
<dbReference type="BioCyc" id="MetaCyc:HS00516-MONOMER"/>
<dbReference type="BRENDA" id="2.1.3.3">
    <property type="organism ID" value="2681"/>
</dbReference>
<dbReference type="PathwayCommons" id="P00480"/>
<dbReference type="Reactome" id="R-HSA-1268020">
    <property type="pathway name" value="Mitochondrial protein import"/>
</dbReference>
<dbReference type="Reactome" id="R-HSA-70635">
    <property type="pathway name" value="Urea cycle"/>
</dbReference>
<dbReference type="SABIO-RK" id="P00480"/>
<dbReference type="SignaLink" id="P00480"/>
<dbReference type="SIGNOR" id="P00480"/>
<dbReference type="UniPathway" id="UPA00158">
    <property type="reaction ID" value="UER00271"/>
</dbReference>
<dbReference type="BioGRID-ORCS" id="5009">
    <property type="hits" value="4 hits in 786 CRISPR screens"/>
</dbReference>
<dbReference type="ChiTaRS" id="OTC">
    <property type="organism name" value="human"/>
</dbReference>
<dbReference type="EvolutionaryTrace" id="P00480"/>
<dbReference type="GeneWiki" id="Ornithine_transcarbamylase"/>
<dbReference type="GenomeRNAi" id="5009"/>
<dbReference type="Pharos" id="P00480">
    <property type="development level" value="Tchem"/>
</dbReference>
<dbReference type="PRO" id="PR:P00480"/>
<dbReference type="Proteomes" id="UP000005640">
    <property type="component" value="Chromosome X"/>
</dbReference>
<dbReference type="RNAct" id="P00480">
    <property type="molecule type" value="protein"/>
</dbReference>
<dbReference type="Bgee" id="ENSG00000036473">
    <property type="expression patterns" value="Expressed in jejunal mucosa and 92 other cell types or tissues"/>
</dbReference>
<dbReference type="ExpressionAtlas" id="P00480">
    <property type="expression patterns" value="baseline and differential"/>
</dbReference>
<dbReference type="GO" id="GO:0005743">
    <property type="term" value="C:mitochondrial inner membrane"/>
    <property type="evidence" value="ECO:0007669"/>
    <property type="project" value="Ensembl"/>
</dbReference>
<dbReference type="GO" id="GO:0005759">
    <property type="term" value="C:mitochondrial matrix"/>
    <property type="evidence" value="ECO:0000304"/>
    <property type="project" value="Reactome"/>
</dbReference>
<dbReference type="GO" id="GO:0005739">
    <property type="term" value="C:mitochondrion"/>
    <property type="evidence" value="ECO:0000314"/>
    <property type="project" value="BHF-UCL"/>
</dbReference>
<dbReference type="GO" id="GO:0016597">
    <property type="term" value="F:amino acid binding"/>
    <property type="evidence" value="ECO:0007669"/>
    <property type="project" value="Ensembl"/>
</dbReference>
<dbReference type="GO" id="GO:0042802">
    <property type="term" value="F:identical protein binding"/>
    <property type="evidence" value="ECO:0007669"/>
    <property type="project" value="Ensembl"/>
</dbReference>
<dbReference type="GO" id="GO:0004585">
    <property type="term" value="F:ornithine carbamoyltransferase activity"/>
    <property type="evidence" value="ECO:0000314"/>
    <property type="project" value="BHF-UCL"/>
</dbReference>
<dbReference type="GO" id="GO:0042301">
    <property type="term" value="F:phosphate ion binding"/>
    <property type="evidence" value="ECO:0007669"/>
    <property type="project" value="Ensembl"/>
</dbReference>
<dbReference type="GO" id="GO:0005543">
    <property type="term" value="F:phospholipid binding"/>
    <property type="evidence" value="ECO:0007669"/>
    <property type="project" value="Ensembl"/>
</dbReference>
<dbReference type="GO" id="GO:0097272">
    <property type="term" value="P:ammonium homeostasis"/>
    <property type="evidence" value="ECO:0000315"/>
    <property type="project" value="BHF-UCL"/>
</dbReference>
<dbReference type="GO" id="GO:0042450">
    <property type="term" value="P:arginine biosynthetic process via ornithine"/>
    <property type="evidence" value="ECO:0000318"/>
    <property type="project" value="GO_Central"/>
</dbReference>
<dbReference type="GO" id="GO:0019240">
    <property type="term" value="P:citrulline biosynthetic process"/>
    <property type="evidence" value="ECO:0000314"/>
    <property type="project" value="BHF-UCL"/>
</dbReference>
<dbReference type="GO" id="GO:0006526">
    <property type="term" value="P:L-arginine biosynthetic process"/>
    <property type="evidence" value="ECO:0007669"/>
    <property type="project" value="UniProtKB-KW"/>
</dbReference>
<dbReference type="GO" id="GO:0001889">
    <property type="term" value="P:liver development"/>
    <property type="evidence" value="ECO:0007669"/>
    <property type="project" value="Ensembl"/>
</dbReference>
<dbReference type="GO" id="GO:0007494">
    <property type="term" value="P:midgut development"/>
    <property type="evidence" value="ECO:0007669"/>
    <property type="project" value="Ensembl"/>
</dbReference>
<dbReference type="GO" id="GO:0055081">
    <property type="term" value="P:monoatomic anion homeostasis"/>
    <property type="evidence" value="ECO:0007669"/>
    <property type="project" value="Ensembl"/>
</dbReference>
<dbReference type="GO" id="GO:0006593">
    <property type="term" value="P:ornithine catabolic process"/>
    <property type="evidence" value="ECO:0000314"/>
    <property type="project" value="BHF-UCL"/>
</dbReference>
<dbReference type="GO" id="GO:0070781">
    <property type="term" value="P:response to biotin"/>
    <property type="evidence" value="ECO:0007669"/>
    <property type="project" value="Ensembl"/>
</dbReference>
<dbReference type="GO" id="GO:0032868">
    <property type="term" value="P:response to insulin"/>
    <property type="evidence" value="ECO:0007669"/>
    <property type="project" value="Ensembl"/>
</dbReference>
<dbReference type="GO" id="GO:0009410">
    <property type="term" value="P:response to xenobiotic stimulus"/>
    <property type="evidence" value="ECO:0007669"/>
    <property type="project" value="Ensembl"/>
</dbReference>
<dbReference type="GO" id="GO:0010043">
    <property type="term" value="P:response to zinc ion"/>
    <property type="evidence" value="ECO:0007669"/>
    <property type="project" value="Ensembl"/>
</dbReference>
<dbReference type="GO" id="GO:0000050">
    <property type="term" value="P:urea cycle"/>
    <property type="evidence" value="ECO:0000314"/>
    <property type="project" value="BHF-UCL"/>
</dbReference>
<dbReference type="FunFam" id="3.40.50.1370:FF:000009">
    <property type="entry name" value="Ornithine carbamoyltransferase, mitochondrial"/>
    <property type="match status" value="1"/>
</dbReference>
<dbReference type="FunFam" id="3.40.50.1370:FF:000010">
    <property type="entry name" value="Ornithine carbamoyltransferase, mitochondrial"/>
    <property type="match status" value="1"/>
</dbReference>
<dbReference type="Gene3D" id="3.40.50.1370">
    <property type="entry name" value="Aspartate/ornithine carbamoyltransferase"/>
    <property type="match status" value="2"/>
</dbReference>
<dbReference type="InterPro" id="IPR006132">
    <property type="entry name" value="Asp/Orn_carbamoyltranf_P-bd"/>
</dbReference>
<dbReference type="InterPro" id="IPR006130">
    <property type="entry name" value="Asp/Orn_carbamoylTrfase"/>
</dbReference>
<dbReference type="InterPro" id="IPR036901">
    <property type="entry name" value="Asp/Orn_carbamoylTrfase_sf"/>
</dbReference>
<dbReference type="InterPro" id="IPR006131">
    <property type="entry name" value="Asp_carbamoyltransf_Asp/Orn-bd"/>
</dbReference>
<dbReference type="InterPro" id="IPR002292">
    <property type="entry name" value="Orn/put_carbamltrans"/>
</dbReference>
<dbReference type="NCBIfam" id="TIGR00658">
    <property type="entry name" value="orni_carb_tr"/>
    <property type="match status" value="1"/>
</dbReference>
<dbReference type="NCBIfam" id="NF001986">
    <property type="entry name" value="PRK00779.1"/>
    <property type="match status" value="1"/>
</dbReference>
<dbReference type="PANTHER" id="PTHR45753">
    <property type="entry name" value="ORNITHINE CARBAMOYLTRANSFERASE, MITOCHONDRIAL"/>
    <property type="match status" value="1"/>
</dbReference>
<dbReference type="PANTHER" id="PTHR45753:SF3">
    <property type="entry name" value="ORNITHINE TRANSCARBAMYLASE, MITOCHONDRIAL"/>
    <property type="match status" value="1"/>
</dbReference>
<dbReference type="Pfam" id="PF00185">
    <property type="entry name" value="OTCace"/>
    <property type="match status" value="1"/>
</dbReference>
<dbReference type="Pfam" id="PF02729">
    <property type="entry name" value="OTCace_N"/>
    <property type="match status" value="1"/>
</dbReference>
<dbReference type="PRINTS" id="PR00100">
    <property type="entry name" value="AOTCASE"/>
</dbReference>
<dbReference type="PRINTS" id="PR00102">
    <property type="entry name" value="OTCASE"/>
</dbReference>
<dbReference type="SUPFAM" id="SSF53671">
    <property type="entry name" value="Aspartate/ornithine carbamoyltransferase"/>
    <property type="match status" value="1"/>
</dbReference>
<dbReference type="PROSITE" id="PS00097">
    <property type="entry name" value="CARBAMOYLTRANSFERASE"/>
    <property type="match status" value="1"/>
</dbReference>
<proteinExistence type="evidence at protein level"/>
<feature type="transit peptide" description="Mitochondrion" evidence="19">
    <location>
        <begin position="1"/>
        <end position="32"/>
    </location>
</feature>
<feature type="chain" id="PRO_0000020334" description="Ornithine transcarbamylase, mitochondrial">
    <location>
        <begin position="33"/>
        <end position="354"/>
    </location>
</feature>
<feature type="active site" description="Proton acceptor" evidence="44">
    <location>
        <position position="303"/>
    </location>
</feature>
<feature type="binding site" evidence="5 48">
    <location>
        <begin position="90"/>
        <end position="93"/>
    </location>
    <ligand>
        <name>carbamoyl phosphate</name>
        <dbReference type="ChEBI" id="CHEBI:58228"/>
    </ligand>
</feature>
<feature type="binding site" evidence="5 48">
    <location>
        <position position="141"/>
    </location>
    <ligand>
        <name>carbamoyl phosphate</name>
        <dbReference type="ChEBI" id="CHEBI:58228"/>
    </ligand>
</feature>
<feature type="binding site" evidence="5 48">
    <location>
        <position position="168"/>
    </location>
    <ligand>
        <name>carbamoyl phosphate</name>
        <dbReference type="ChEBI" id="CHEBI:58228"/>
    </ligand>
</feature>
<feature type="binding site" evidence="5 48">
    <location>
        <position position="171"/>
    </location>
    <ligand>
        <name>carbamoyl phosphate</name>
        <dbReference type="ChEBI" id="CHEBI:58228"/>
    </ligand>
</feature>
<feature type="binding site" evidence="44 48">
    <location>
        <position position="199"/>
    </location>
    <ligand>
        <name>L-ornithine</name>
        <dbReference type="ChEBI" id="CHEBI:46911"/>
    </ligand>
</feature>
<feature type="binding site" evidence="44 48">
    <location>
        <position position="263"/>
    </location>
    <ligand>
        <name>L-ornithine</name>
        <dbReference type="ChEBI" id="CHEBI:46911"/>
    </ligand>
</feature>
<feature type="binding site" evidence="44 48">
    <location>
        <position position="267"/>
    </location>
    <ligand>
        <name>L-ornithine</name>
        <dbReference type="ChEBI" id="CHEBI:46911"/>
    </ligand>
</feature>
<feature type="binding site" evidence="44 48">
    <location>
        <position position="268"/>
    </location>
    <ligand>
        <name>L-ornithine</name>
        <dbReference type="ChEBI" id="CHEBI:46911"/>
    </ligand>
</feature>
<feature type="binding site" evidence="5 48">
    <location>
        <begin position="303"/>
        <end position="304"/>
    </location>
    <ligand>
        <name>carbamoyl phosphate</name>
        <dbReference type="ChEBI" id="CHEBI:58228"/>
    </ligand>
</feature>
<feature type="binding site" evidence="5 48">
    <location>
        <position position="330"/>
    </location>
    <ligand>
        <name>carbamoyl phosphate</name>
        <dbReference type="ChEBI" id="CHEBI:58228"/>
    </ligand>
</feature>
<feature type="modified residue" description="N6-acetyllysine; alternate" evidence="1">
    <location>
        <position position="70"/>
    </location>
</feature>
<feature type="modified residue" description="N6-succinyllysine; alternate" evidence="1">
    <location>
        <position position="70"/>
    </location>
</feature>
<feature type="modified residue" description="N6-succinyllysine" evidence="1">
    <location>
        <position position="80"/>
    </location>
</feature>
<feature type="modified residue" description="N6-acetyllysine; alternate" evidence="12">
    <location>
        <position position="88"/>
    </location>
</feature>
<feature type="modified residue" description="N6-succinyllysine; alternate" evidence="1">
    <location>
        <position position="88"/>
    </location>
</feature>
<feature type="modified residue" description="Phosphoserine" evidence="50">
    <location>
        <position position="133"/>
    </location>
</feature>
<feature type="modified residue" description="N6-acetyllysine; alternate" evidence="1">
    <location>
        <position position="144"/>
    </location>
</feature>
<feature type="modified residue" description="N6-succinyllysine; alternate" evidence="1">
    <location>
        <position position="144"/>
    </location>
</feature>
<feature type="modified residue" description="N6-acetyllysine; alternate" evidence="1">
    <location>
        <position position="221"/>
    </location>
</feature>
<feature type="modified residue" description="N6-succinyllysine; alternate" evidence="1">
    <location>
        <position position="221"/>
    </location>
</feature>
<feature type="modified residue" description="N6-acetyllysine; alternate" evidence="1">
    <location>
        <position position="231"/>
    </location>
</feature>
<feature type="modified residue" description="N6-succinyllysine; alternate" evidence="1">
    <location>
        <position position="231"/>
    </location>
</feature>
<feature type="modified residue" description="N6-acetyllysine; alternate" evidence="1">
    <location>
        <position position="238"/>
    </location>
</feature>
<feature type="modified residue" description="N6-succinyllysine; alternate" evidence="1">
    <location>
        <position position="238"/>
    </location>
</feature>
<feature type="modified residue" description="N6-acetyllysine" evidence="1">
    <location>
        <position position="243"/>
    </location>
</feature>
<feature type="modified residue" description="N6-succinyllysine" evidence="1">
    <location>
        <position position="274"/>
    </location>
</feature>
<feature type="modified residue" description="N6-succinyllysine" evidence="1">
    <location>
        <position position="289"/>
    </location>
</feature>
<feature type="modified residue" description="N6-acetyllysine; alternate" evidence="1">
    <location>
        <position position="292"/>
    </location>
</feature>
<feature type="modified residue" description="N6-succinyllysine; alternate" evidence="1">
    <location>
        <position position="292"/>
    </location>
</feature>
<feature type="modified residue" description="N6-acetyllysine; alternate" evidence="1">
    <location>
        <position position="307"/>
    </location>
</feature>
<feature type="modified residue" description="N6-succinyllysine; alternate" evidence="1">
    <location>
        <position position="307"/>
    </location>
</feature>
<feature type="sequence variant" id="VAR_004843" description="In OTCD; dbSNP:rs68031618." evidence="14">
    <original>R</original>
    <variation>Q</variation>
    <location>
        <position position="26"/>
    </location>
</feature>
<feature type="sequence variant" id="VAR_004844" description="In OTCD; late onset; dbSNP:rs72554306." evidence="37">
    <original>G</original>
    <variation>C</variation>
    <location>
        <position position="39"/>
    </location>
</feature>
<feature type="sequence variant" id="VAR_004845" description="In OTCD; late onset; dbSNP:rs72554307.">
    <original>R</original>
    <variation>C</variation>
    <location>
        <position position="40"/>
    </location>
</feature>
<feature type="sequence variant" id="VAR_004846" description="In OTCD; late onset; dbSNP:rs72554308." evidence="21 40">
    <original>R</original>
    <variation>H</variation>
    <location>
        <position position="40"/>
    </location>
</feature>
<feature type="sequence variant" id="VAR_004847" description="In dbSNP:rs72554309." evidence="33">
    <original>L</original>
    <variation>F</variation>
    <location>
        <position position="43"/>
    </location>
</feature>
<feature type="sequence variant" id="VAR_004848" description="In OTCD; dbSNP:rs72554310." evidence="29">
    <original>T</original>
    <variation>I</variation>
    <location>
        <position position="44"/>
    </location>
</feature>
<feature type="sequence variant" id="VAR_004849" description="In OTCD; dbSNP:rs72554312." evidence="14">
    <original>L</original>
    <variation>P</variation>
    <location>
        <position position="45"/>
    </location>
</feature>
<feature type="sequence variant" id="VAR_004850" description="In OTCD; dbSNP:rs72554311.">
    <original>L</original>
    <variation>V</variation>
    <location>
        <position position="45"/>
    </location>
</feature>
<feature type="sequence variant" id="VAR_004851" description="In dbSNP:rs1800321." evidence="8 14">
    <original>K</original>
    <variation>R</variation>
    <location>
        <position position="46"/>
    </location>
</feature>
<feature type="sequence variant" id="VAR_004852" description="In OTCD; neonatal; dbSNP:rs67939655.">
    <original>N</original>
    <variation>I</variation>
    <location>
        <position position="47"/>
    </location>
</feature>
<feature type="sequence variant" id="VAR_004853" description="In OTCD; late onset; dbSNP:rs67486158.">
    <original>G</original>
    <variation>R</variation>
    <location>
        <position position="50"/>
    </location>
</feature>
<feature type="sequence variant" id="VAR_004854" description="In OTCD; late onset; dbSNP:rs72554319." evidence="38">
    <original>Y</original>
    <variation>D</variation>
    <location>
        <position position="55"/>
    </location>
</feature>
<feature type="sequence variant" id="VAR_004855" description="In OTCD; late onset; dbSNP:rs72554320.">
    <original>M</original>
    <variation>T</variation>
    <location>
        <position position="56"/>
    </location>
</feature>
<feature type="sequence variant" id="VAR_004856" description="In OTCD; dbSNP:rs72554323.">
    <original>S</original>
    <variation>L</variation>
    <location>
        <position position="60"/>
    </location>
</feature>
<feature type="sequence variant" id="VAR_004857" description="In OTCD; late onset; dbSNP:rs72554324." evidence="33">
    <original>L</original>
    <variation>P</variation>
    <location>
        <position position="63"/>
    </location>
</feature>
<feature type="sequence variant" id="VAR_004858" description="In OTCD; dbSNP:rs72554331." evidence="7">
    <original>G</original>
    <variation>E</variation>
    <location>
        <position position="79"/>
    </location>
</feature>
<feature type="sequence variant" id="VAR_004859" description="In OTCD.">
    <location>
        <position position="82"/>
    </location>
</feature>
<feature type="sequence variant" id="VAR_004860" description="In OTCD; dbSNP:rs72554337." evidence="41">
    <original>G</original>
    <variation>D</variation>
    <location>
        <position position="83"/>
    </location>
</feature>
<feature type="sequence variant" id="VAR_004861" description="In OTCD; neonatal; dbSNP:rs72554336.">
    <original>G</original>
    <variation>R</variation>
    <location>
        <position position="83"/>
    </location>
</feature>
<feature type="sequence variant" id="VAR_004862" description="In OTCD; dbSNP:rs72554338.">
    <original>E</original>
    <variation>K</variation>
    <location>
        <position position="87"/>
    </location>
</feature>
<feature type="sequence variant" id="VAR_004863" description="In OTCD; late onset; dbSNP:rs72554339." evidence="30 40">
    <original>K</original>
    <variation>N</variation>
    <location>
        <position position="88"/>
    </location>
</feature>
<feature type="sequence variant" id="VAR_004864" description="In OTCD; dbSNP:rs72554342.">
    <original>S</original>
    <variation>R</variation>
    <location>
        <position position="90"/>
    </location>
</feature>
<feature type="sequence variant" id="VAR_004865" description="In OTCD; dbSNP:rs66550389." evidence="9">
    <original>R</original>
    <variation>Q</variation>
    <location>
        <position position="92"/>
    </location>
</feature>
<feature type="sequence variant" id="VAR_004866" description="In OTCD; late onset; dbSNP:rs72554344.">
    <original>T</original>
    <variation>A</variation>
    <location>
        <position position="93"/>
    </location>
</feature>
<feature type="sequence variant" id="VAR_004867" description="In OTCD; dbSNP:rs72554345." evidence="7">
    <original>R</original>
    <variation>T</variation>
    <location>
        <position position="94"/>
    </location>
</feature>
<feature type="sequence variant" id="VAR_004868" description="In OTCD; late onset; dbSNP:rs72554349." evidence="33">
    <original>G</original>
    <variation>D</variation>
    <location>
        <position position="100"/>
    </location>
</feature>
<feature type="sequence variant" id="VAR_004869" description="In dbSNP:rs1133135." evidence="16 29">
    <original>F</original>
    <variation>L</variation>
    <location>
        <position position="101"/>
    </location>
</feature>
<feature type="sequence variant" id="VAR_004870" description="In OTCD; dbSNP:rs72554350.">
    <original>A</original>
    <variation>E</variation>
    <location>
        <position position="102"/>
    </location>
</feature>
<feature type="sequence variant" id="VAR_004871" description="In dbSNP:rs1800324." evidence="9 19">
    <original>L</original>
    <variation>P</variation>
    <location>
        <position position="111"/>
    </location>
</feature>
<feature type="sequence variant" id="VAR_004872" description="In OTCD; dbSNP:rs66539573." evidence="22">
    <original>H</original>
    <variation>L</variation>
    <location>
        <position position="117"/>
    </location>
</feature>
<feature type="sequence variant" id="VAR_004873" description="In OTCD; late onset; dbSNP:rs66539573.">
    <original>H</original>
    <variation>R</variation>
    <location>
        <position position="117"/>
    </location>
</feature>
<feature type="sequence variant" id="VAR_004874" description="In OTCD; neonatal; dbSNP:rs72554356." evidence="28">
    <original>T</original>
    <variation>M</variation>
    <location>
        <position position="125"/>
    </location>
</feature>
<feature type="sequence variant" id="VAR_004875" description="In OTCD; early onset; loss of ornithine carbamoyltransferase activity; 0.9% of wild-type activity; dbSNP:rs72554358." evidence="24">
    <original>D</original>
    <variation>G</variation>
    <location>
        <position position="126"/>
    </location>
</feature>
<feature type="sequence variant" id="VAR_004876" description="In OTCD; early onset; decreased ornithine carbamoyltransferase activity; 2.1% of wild-type activity; dbSNP:rs66656800." evidence="21 24">
    <original>R</original>
    <variation>H</variation>
    <location>
        <position position="129"/>
    </location>
</feature>
<feature type="sequence variant" id="VAR_004877" description="In OTCD; dbSNP:rs72556259.">
    <original>L</original>
    <variation>S</variation>
    <location>
        <position position="139"/>
    </location>
</feature>
<feature type="sequence variant" id="VAR_010605" description="In OTCD; late onset; dbSNP:rs72556260." evidence="25">
    <original>A</original>
    <variation>P</variation>
    <location>
        <position position="140"/>
    </location>
</feature>
<feature type="sequence variant" id="VAR_004878" description="In OTCD; dbSNP:rs68026851.">
    <original>R</original>
    <variation>P</variation>
    <location>
        <position position="141"/>
    </location>
</feature>
<feature type="sequence variant" id="VAR_004879" description="In OTCD; most common variant; loss of ornithine carbamoyltransferase activity; activity is 100-fold lower; dbSNP:rs68026851." evidence="15 17 29">
    <original>R</original>
    <variation>Q</variation>
    <location>
        <position position="141"/>
    </location>
</feature>
<feature type="sequence variant" id="VAR_004880" description="In OTCD; dbSNP:rs66741318.">
    <original>L</original>
    <variation>F</variation>
    <location>
        <position position="148"/>
    </location>
</feature>
<feature type="sequence variant" id="VAR_004881" description="In OTCD; dbSNP:rs72556269." evidence="27">
    <original>I</original>
    <variation>T</variation>
    <location>
        <position position="159"/>
    </location>
</feature>
<feature type="sequence variant" id="VAR_012651" description="In OTCD; dbSNP:rs67954347." evidence="6">
    <original>I</original>
    <variation>S</variation>
    <location>
        <position position="160"/>
    </location>
</feature>
<feature type="sequence variant" id="VAR_004882" description="In OTCD; dbSNP:rs72556271.">
    <original>N</original>
    <variation>S</variation>
    <location>
        <position position="161"/>
    </location>
</feature>
<feature type="sequence variant" id="VAR_004883" description="In OTCD; dbSNP:rs66626662.">
    <original>G</original>
    <variation>R</variation>
    <location>
        <position position="162"/>
    </location>
</feature>
<feature type="sequence variant" id="VAR_004884" description="In OTCD; late onset; dbSNP:rs72556276.">
    <original>H</original>
    <variation>Q</variation>
    <location>
        <position position="168"/>
    </location>
</feature>
<feature type="sequence variant" id="VAR_004885" description="In OTCD; late onset; dbSNP:rs66867430.">
    <original>H</original>
    <variation>R</variation>
    <location>
        <position position="168"/>
    </location>
</feature>
<feature type="sequence variant" id="VAR_009233" description="In OTCD; dbSNP:rs72556279." evidence="3">
    <original>I</original>
    <variation>F</variation>
    <location>
        <position position="172"/>
    </location>
</feature>
<feature type="sequence variant" id="VAR_004886" description="In OTCD; early onset; loss of ornithine carbamoyltransferase activity; dbSNP:rs72556280." evidence="24">
    <original>I</original>
    <variation>M</variation>
    <location>
        <position position="172"/>
    </location>
</feature>
<feature type="sequence variant" id="VAR_004887" description="In OTCD; dbSNP:rs72556281.">
    <original>A</original>
    <variation>P</variation>
    <location>
        <position position="174"/>
    </location>
</feature>
<feature type="sequence variant" id="VAR_004888" description="In OTCD; dbSNP:rs68033093.">
    <original>D</original>
    <variation>V</variation>
    <location>
        <position position="175"/>
    </location>
</feature>
<feature type="sequence variant" id="VAR_004889" description="In OTCD; late onset; dbSNP:rs72556283." evidence="30">
    <original>Y</original>
    <variation>C</variation>
    <location>
        <position position="176"/>
    </location>
</feature>
<feature type="sequence variant" id="VAR_004891" description="In OTCD; neonatal." evidence="36">
    <location>
        <begin position="178"/>
        <end position="179"/>
    </location>
</feature>
<feature type="sequence variant" id="VAR_004890" description="In OTCD; neonatal; dbSNP:rs72556284.">
    <original>T</original>
    <variation>M</variation>
    <location>
        <position position="178"/>
    </location>
</feature>
<feature type="sequence variant" id="VAR_004892" description="In OTCD; dbSNP:rs72556287." evidence="36">
    <original>Q</original>
    <variation>H</variation>
    <location>
        <position position="180"/>
    </location>
</feature>
<feature type="sequence variant" id="VAR_004893" description="In OTCD; neonatal; dbSNP:rs72556290.">
    <original>E</original>
    <variation>G</variation>
    <location>
        <position position="181"/>
    </location>
</feature>
<feature type="sequence variant" id="VAR_004894" description="In OTCD; dbSNP:rs72556291." evidence="22">
    <original>H</original>
    <variation>L</variation>
    <location>
        <position position="182"/>
    </location>
</feature>
<feature type="sequence variant" id="VAR_004895" description="In OTCD; dbSNP:rs72556293.">
    <original>Y</original>
    <variation>C</variation>
    <location>
        <position position="183"/>
    </location>
</feature>
<feature type="sequence variant" id="VAR_004896" description="In OTCD; late onset; dbSNP:rs72556292." evidence="33">
    <original>Y</original>
    <variation>D</variation>
    <location>
        <position position="183"/>
    </location>
</feature>
<feature type="sequence variant" id="VAR_004897" description="In OTCD; neonatal; dbSNP:rs72556294." evidence="28">
    <original>G</original>
    <variation>R</variation>
    <location>
        <position position="188"/>
    </location>
</feature>
<feature type="sequence variant" id="VAR_009234" description="In OTCD; dbSNP:rs72556295." evidence="3">
    <original>G</original>
    <variation>V</variation>
    <location>
        <position position="188"/>
    </location>
</feature>
<feature type="sequence variant" id="VAR_012652" description="In OTCD; dbSNP:rs72556296." evidence="6">
    <original>L</original>
    <variation>F</variation>
    <location>
        <position position="191"/>
    </location>
</feature>
<feature type="sequence variant" id="VAR_004898" description="In OTCD; neonatal; dbSNP:rs72556298.">
    <original>S</original>
    <variation>R</variation>
    <location>
        <position position="192"/>
    </location>
</feature>
<feature type="sequence variant" id="VAR_004899" description="In OTCD; loss of ornithine carbamoyltransferase activity; dbSNP:rs67294955." evidence="21 26">
    <original>G</original>
    <variation>R</variation>
    <location>
        <position position="195"/>
    </location>
</feature>
<feature type="sequence variant" id="VAR_004900" description="In OTCD; neonatal; decreased ornithine carbamoyltransferase activity; 3.7% activity; dbSNP:rs72556300." evidence="26">
    <original>D</original>
    <variation>V</variation>
    <location>
        <position position="196"/>
    </location>
</feature>
<feature type="sequence variant" id="VAR_004901" description="In OTCD; neonatal; dbSNP:rs66642398.">
    <original>D</original>
    <variation>Y</variation>
    <location>
        <position position="196"/>
    </location>
</feature>
<feature type="sequence variant" id="VAR_004902" description="In OTCD; dbSNP:rs72556302.">
    <original>G</original>
    <variation>E</variation>
    <location>
        <position position="197"/>
    </location>
</feature>
<feature type="sequence variant" id="VAR_009235" description="In OTCD; dbSNP:rs72556301." evidence="3">
    <original>G</original>
    <variation>R</variation>
    <location>
        <position position="197"/>
    </location>
</feature>
<feature type="sequence variant" id="VAR_010606" description="In OTCD; dbSNP:rs72558404." evidence="2">
    <original>N</original>
    <variation>K</variation>
    <location>
        <position position="198"/>
    </location>
</feature>
<feature type="sequence variant" id="VAR_004903" description="In OTCD; neonatal; dbSNP:rs72558407." evidence="36">
    <original>L</original>
    <variation>P</variation>
    <location>
        <position position="201"/>
    </location>
</feature>
<feature type="sequence variant" id="VAR_004904" description="In OTCD; dbSNP:rs72558408." evidence="40">
    <original>H</original>
    <variation>Y</variation>
    <location>
        <position position="202"/>
    </location>
</feature>
<feature type="sequence variant" id="VAR_004905" description="In OTCD; dbSNP:rs72558410." evidence="22">
    <original>S</original>
    <variation>C</variation>
    <location>
        <position position="203"/>
    </location>
</feature>
<feature type="sequence variant" id="VAR_012653" description="In OTCD; dbSNP:rs72558413." evidence="6">
    <original>M</original>
    <variation>I</variation>
    <location>
        <position position="206"/>
    </location>
</feature>
<feature type="sequence variant" id="VAR_004906" description="In OTCD; neonatal; dbSNP:rs72558412.">
    <original>M</original>
    <variation>R</variation>
    <location>
        <position position="206"/>
    </location>
</feature>
<feature type="sequence variant" id="VAR_004907" description="In OTCD; neonatal; dbSNP:rs72558415." evidence="36">
    <original>S</original>
    <variation>R</variation>
    <location>
        <position position="207"/>
    </location>
</feature>
<feature type="sequence variant" id="VAR_004908" description="In OTCD; late onset; dbSNP:rs72558416.">
    <original>A</original>
    <variation>T</variation>
    <location>
        <position position="208"/>
    </location>
</feature>
<feature type="sequence variant" id="VAR_004909" description="In OTCD; neonatal; dbSNP:rs72558417." evidence="2 27 28">
    <original>A</original>
    <variation>V</variation>
    <location>
        <position position="209"/>
    </location>
</feature>
<feature type="sequence variant" id="VAR_004910" description="In OTCD; late onset." evidence="33">
    <original>M</original>
    <variation>K</variation>
    <location>
        <position position="213"/>
    </location>
</feature>
<feature type="sequence variant" id="VAR_010607" description="In OTCD; neonatal; dbSNP:rs72558420." evidence="29">
    <original>H</original>
    <variation>Y</variation>
    <location>
        <position position="214"/>
    </location>
</feature>
<feature type="sequence variant" id="VAR_004911" description="In OTCD; dbSNP:rs72558423." evidence="14">
    <original>Q</original>
    <variation>E</variation>
    <location>
        <position position="216"/>
    </location>
</feature>
<feature type="sequence variant" id="VAR_004912" description="In OTCD; late onset; dbSNP:rs72558425." evidence="30">
    <original>P</original>
    <variation>A</variation>
    <location>
        <position position="220"/>
    </location>
</feature>
<feature type="sequence variant" id="VAR_004913" description="In OTCD; dbSNP:rs67120076." evidence="11">
    <original>P</original>
    <variation>L</variation>
    <location>
        <position position="225"/>
    </location>
</feature>
<feature type="sequence variant" id="VAR_004914" description="In OTCD; neonatal; dbSNP:rs67120076.">
    <original>P</original>
    <variation>R</variation>
    <location>
        <position position="225"/>
    </location>
</feature>
<feature type="sequence variant" id="VAR_004915" description="In OTCD; late onset; dbSNP:rs72558428." evidence="21">
    <original>P</original>
    <variation>T</variation>
    <location>
        <position position="225"/>
    </location>
</feature>
<feature type="sequence variant" id="VAR_004916" description="In OTCD; late onset; dbSNP:rs72558435.">
    <original>T</original>
    <variation>I</variation>
    <location>
        <position position="242"/>
    </location>
</feature>
<feature type="sequence variant" id="VAR_004917" description="In OTCD; late onset; dbSNP:rs72558436." evidence="37">
    <original>L</original>
    <variation>Q</variation>
    <location>
        <position position="244"/>
    </location>
</feature>
<feature type="sequence variant" id="VAR_004918" description="In OTCD; neonatal/late onset; dbSNP:rs72558437.">
    <original>T</original>
    <variation>K</variation>
    <location>
        <position position="247"/>
    </location>
</feature>
<feature type="sequence variant" id="VAR_004919" description="In OTCD; dbSNP:rs72558440.">
    <original>H</original>
    <variation>P</variation>
    <location>
        <position position="255"/>
    </location>
</feature>
<feature type="sequence variant" id="VAR_010608" description="In OTCD; mild; dbSNP:rs67333670." evidence="4">
    <original>T</original>
    <variation>K</variation>
    <location>
        <position position="262"/>
    </location>
</feature>
<feature type="sequence variant" id="VAR_004920" description="In OTCD; dbSNP:rs72558443.">
    <original>D</original>
    <variation>G</variation>
    <location>
        <position position="263"/>
    </location>
</feature>
<feature type="sequence variant" id="VAR_004921" description="In OTCD; dbSNP:rs72558442." evidence="40">
    <original>D</original>
    <variation>N</variation>
    <location>
        <position position="263"/>
    </location>
</feature>
<feature type="sequence variant" id="VAR_004922" description="In OTCD; late onset; decreased ornithine carbamoyltransferase activity; 8.9% activity; dbSNP:rs72558444." evidence="4 26">
    <original>T</original>
    <variation>A</variation>
    <location>
        <position position="264"/>
    </location>
</feature>
<feature type="sequence variant" id="VAR_004923" description="In OTCD; late onset; dbSNP:rs67156896." evidence="36">
    <original>T</original>
    <variation>I</variation>
    <location>
        <position position="264"/>
    </location>
</feature>
<feature type="sequence variant" id="VAR_010609" description="In OTCD; mild; dbSNP:rs72558446." evidence="4">
    <original>W</original>
    <variation>L</variation>
    <location>
        <position position="265"/>
    </location>
</feature>
<feature type="sequence variant" id="VAR_004924" description="In OTCD; dbSNP:rs72558448." evidence="36">
    <original>S</original>
    <variation>R</variation>
    <location>
        <position position="267"/>
    </location>
</feature>
<feature type="sequence variant" id="VAR_004925" description="In OTCD; late onset; dbSNP:rs72558449.">
    <original>M</original>
    <variation>T</variation>
    <location>
        <position position="268"/>
    </location>
</feature>
<feature type="sequence variant" id="VAR_004926" description="In OTCD; neonatal; dbSNP:rs72558450." evidence="20">
    <original>G</original>
    <variation>E</variation>
    <location>
        <position position="269"/>
    </location>
</feature>
<feature type="sequence variant" id="VAR_004927" description="In dbSNP:rs1800328." evidence="2 10 19">
    <original>Q</original>
    <variation>R</variation>
    <location>
        <position position="270"/>
    </location>
</feature>
<feature type="sequence variant" id="VAR_004928" description="In OTCD; late onset; dbSNP:rs72558452." evidence="31">
    <location>
        <position position="272"/>
    </location>
</feature>
<feature type="sequence variant" id="VAR_004929" description="In OTCD; late onset; dbSNP:rs66724222." evidence="21 23">
    <original>R</original>
    <variation>Q</variation>
    <location>
        <position position="277"/>
    </location>
</feature>
<feature type="sequence variant" id="VAR_004930" description="In OTCD; late onset; dbSNP:rs72558454." evidence="13 32">
    <original>R</original>
    <variation>W</variation>
    <location>
        <position position="277"/>
    </location>
</feature>
<feature type="sequence variant" id="VAR_012654" description="In OTCD; dbSNP:rs72558462." evidence="6">
    <original>L</original>
    <variation>F</variation>
    <location>
        <position position="301"/>
    </location>
</feature>
<feature type="sequence variant" id="VAR_004931" description="In OTCD; female; late onset; dbSNP:rs67993095." evidence="28">
    <original>H</original>
    <variation>L</variation>
    <location>
        <position position="302"/>
    </location>
</feature>
<feature type="sequence variant" id="VAR_004932" description="In OTCD; late onset; dbSNP:rs67870244.">
    <original>H</original>
    <variation>Q</variation>
    <location>
        <position position="302"/>
    </location>
</feature>
<feature type="sequence variant" id="VAR_004933" description="In OTCD; neonatal; dbSNP:rs72558463." evidence="30">
    <original>H</original>
    <variation>Y</variation>
    <location>
        <position position="302"/>
    </location>
</feature>
<feature type="sequence variant" id="VAR_004934" description="In OTCD; neonatal; dbSNP:rs67468335." evidence="37">
    <original>C</original>
    <variation>R</variation>
    <location>
        <position position="303"/>
    </location>
</feature>
<feature type="sequence variant" id="VAR_004935" description="In OTCD; dbSNP:rs72558464.">
    <original>C</original>
    <variation>Y</variation>
    <location>
        <position position="303"/>
    </location>
</feature>
<feature type="sequence variant" id="VAR_004936" description="In OTCD; dbSNP:rs72558465." evidence="7">
    <original>L</original>
    <variation>F</variation>
    <location>
        <position position="304"/>
    </location>
</feature>
<feature type="sequence variant" id="VAR_012655" description="In OTCD; dbSNP:rs67501347." evidence="6">
    <original>P</original>
    <variation>H</variation>
    <location>
        <position position="305"/>
    </location>
</feature>
<feature type="sequence variant" id="VAR_004937" description="In OTCD; late onset." evidence="21">
    <location>
        <position position="309"/>
    </location>
</feature>
<feature type="sequence variant" id="VAR_004938" description="In OTCD; dbSNP:rs72558474." evidence="9">
    <original>R</original>
    <variation>L</variation>
    <location>
        <position position="320"/>
    </location>
</feature>
<feature type="sequence variant" id="VAR_010610" description="In OTCD; dbSNP:rs72558476." evidence="2">
    <original>E</original>
    <variation>K</variation>
    <location>
        <position position="326"/>
    </location>
</feature>
<feature type="sequence variant" id="VAR_004939" description="In OTCD; dbSNP:rs72558478.">
    <original>R</original>
    <variation>G</variation>
    <location>
        <position position="330"/>
    </location>
</feature>
<feature type="sequence variant" id="VAR_012656" evidence="6">
    <original>T</original>
    <variation>A</variation>
    <location>
        <position position="333"/>
    </location>
</feature>
<feature type="sequence variant" id="VAR_004940" description="In OTCD; late onset; dbSNP:rs72558486.">
    <original>A</original>
    <variation>S</variation>
    <location>
        <position position="336"/>
    </location>
</feature>
<feature type="sequence variant" id="VAR_004941" description="In OTCD; late onset; dbSNP:rs72558487.">
    <original>V</original>
    <variation>L</variation>
    <location>
        <position position="337"/>
    </location>
</feature>
<feature type="sequence variant" id="VAR_004942" description="In OTCD; neonatal; dbSNP:rs72558488.">
    <original>V</original>
    <variation>L</variation>
    <location>
        <position position="339"/>
    </location>
</feature>
<feature type="sequence variant" id="VAR_004943" description="In OTCD; late onset; dbSNP:rs72558489." evidence="33">
    <original>S</original>
    <variation>P</variation>
    <location>
        <position position="340"/>
    </location>
</feature>
<feature type="sequence variant" id="VAR_012657" description="In OTCD; dbSNP:rs72558490." evidence="6">
    <original>L</original>
    <variation>P</variation>
    <location>
        <position position="341"/>
    </location>
</feature>
<feature type="sequence variant" id="VAR_004944" description="In OTCD; late onset; dbSNP:rs72558491." evidence="30">
    <original>T</original>
    <variation>K</variation>
    <location>
        <position position="343"/>
    </location>
</feature>
<feature type="sequence variant" id="VAR_004946" description="In OTCD; neonatal; dbSNP:rs72558492.">
    <original>Y</original>
    <variation>C</variation>
    <location>
        <position position="345"/>
    </location>
</feature>
<feature type="sequence variant" id="VAR_004947" description="In OTCD; dbSNP:rs66469337." evidence="7">
    <original>Y</original>
    <variation>D</variation>
    <location>
        <position position="345"/>
    </location>
</feature>
<feature type="sequence variant" id="VAR_004948" description="In OTCD; late onset; dbSNP:rs72558495.">
    <original>F</original>
    <variation>C</variation>
    <location>
        <position position="354"/>
    </location>
</feature>
<feature type="mutagenesis site" description="Loss of cleavage of the transit peptide and loss of localization to mitochondrial matrix; when associated with G-23 and G-26." evidence="19">
    <original>R</original>
    <variation>G</variation>
    <location>
        <position position="15"/>
    </location>
</feature>
<feature type="mutagenesis site" description="Loss of cleavage of the transit peptide and loss of localization to mitochondrial matrix; when associated with G-15 and G-26." evidence="18">
    <original>R</original>
    <variation>G</variation>
    <location>
        <position position="23"/>
    </location>
</feature>
<feature type="mutagenesis site" description="Loss of cleavage of the transit peptide and loss of localization to mitochondrial matrix; when associated with G-15 and G-23." evidence="18">
    <original>R</original>
    <variation>G</variation>
    <location>
        <position position="26"/>
    </location>
</feature>
<feature type="sequence conflict" description="In Ref. 1; AAA59975." evidence="43" ref="1">
    <original>WI</original>
    <variation>CF</variation>
    <location>
        <begin position="193"/>
        <end position="194"/>
    </location>
</feature>
<feature type="helix" evidence="51">
    <location>
        <begin position="45"/>
        <end position="47"/>
    </location>
</feature>
<feature type="helix" evidence="51">
    <location>
        <begin position="50"/>
        <end position="68"/>
    </location>
</feature>
<feature type="turn" evidence="51">
    <location>
        <begin position="76"/>
        <end position="79"/>
    </location>
</feature>
<feature type="strand" evidence="51">
    <location>
        <begin position="81"/>
        <end position="88"/>
    </location>
</feature>
<feature type="helix" evidence="51">
    <location>
        <begin position="92"/>
        <end position="103"/>
    </location>
</feature>
<feature type="strand" evidence="51">
    <location>
        <begin position="107"/>
        <end position="112"/>
    </location>
</feature>
<feature type="turn" evidence="51">
    <location>
        <begin position="113"/>
        <end position="115"/>
    </location>
</feature>
<feature type="turn" evidence="51">
    <location>
        <begin position="119"/>
        <end position="121"/>
    </location>
</feature>
<feature type="helix" evidence="51">
    <location>
        <begin position="124"/>
        <end position="134"/>
    </location>
</feature>
<feature type="strand" evidence="51">
    <location>
        <begin position="136"/>
        <end position="141"/>
    </location>
</feature>
<feature type="helix" evidence="51">
    <location>
        <begin position="145"/>
        <end position="154"/>
    </location>
</feature>
<feature type="strand" evidence="51">
    <location>
        <begin position="159"/>
        <end position="162"/>
    </location>
</feature>
<feature type="helix" evidence="51">
    <location>
        <begin position="169"/>
        <end position="183"/>
    </location>
</feature>
<feature type="strand" evidence="51">
    <location>
        <begin position="190"/>
        <end position="195"/>
    </location>
</feature>
<feature type="helix" evidence="51">
    <location>
        <begin position="199"/>
        <end position="205"/>
    </location>
</feature>
<feature type="turn" evidence="51">
    <location>
        <begin position="206"/>
        <end position="208"/>
    </location>
</feature>
<feature type="helix" evidence="51">
    <location>
        <begin position="209"/>
        <end position="211"/>
    </location>
</feature>
<feature type="strand" evidence="51">
    <location>
        <begin position="214"/>
        <end position="218"/>
    </location>
</feature>
<feature type="helix" evidence="51">
    <location>
        <begin position="227"/>
        <end position="240"/>
    </location>
</feature>
<feature type="strand" evidence="51">
    <location>
        <begin position="244"/>
        <end position="248"/>
    </location>
</feature>
<feature type="helix" evidence="51">
    <location>
        <begin position="250"/>
        <end position="254"/>
    </location>
</feature>
<feature type="strand" evidence="51">
    <location>
        <begin position="258"/>
        <end position="262"/>
    </location>
</feature>
<feature type="helix" evidence="51">
    <location>
        <begin position="271"/>
        <end position="273"/>
    </location>
</feature>
<feature type="helix" evidence="51">
    <location>
        <begin position="274"/>
        <end position="280"/>
    </location>
</feature>
<feature type="turn" evidence="51">
    <location>
        <begin position="281"/>
        <end position="283"/>
    </location>
</feature>
<feature type="helix" evidence="51">
    <location>
        <begin position="288"/>
        <end position="292"/>
    </location>
</feature>
<feature type="strand" evidence="51">
    <location>
        <begin position="299"/>
        <end position="302"/>
    </location>
</feature>
<feature type="turn" evidence="51">
    <location>
        <begin position="308"/>
        <end position="310"/>
    </location>
</feature>
<feature type="helix" evidence="51">
    <location>
        <begin position="313"/>
        <end position="316"/>
    </location>
</feature>
<feature type="helix" evidence="51">
    <location>
        <begin position="323"/>
        <end position="342"/>
    </location>
</feature>
<reference key="1">
    <citation type="journal article" date="1984" name="Science">
        <title>Structure and expression of a complementary DNA for the nuclear coded precursor of human mitochondrial ornithine transcarbamylase.</title>
        <authorList>
            <person name="Horwich A.L."/>
            <person name="Fenton W.A."/>
            <person name="Williams K.R."/>
            <person name="Kalousek F."/>
            <person name="Kraus J.P."/>
            <person name="Doolittle R.F."/>
            <person name="Konigsberg W."/>
            <person name="Rosenberg L.E."/>
        </authorList>
    </citation>
    <scope>NUCLEOTIDE SEQUENCE [MRNA]</scope>
    <scope>VARIANTS PRO-111 AND ARG-270</scope>
    <scope>FUNCTION</scope>
    <scope>CATALYTIC ACTIVITY</scope>
    <scope>TRANSIT PEPTIDE</scope>
    <source>
        <tissue>Liver</tissue>
    </source>
</reference>
<reference key="2">
    <citation type="journal article" date="1988" name="J. Biochem.">
        <title>Structure of the human ornithine transcarbamylase gene.</title>
        <authorList>
            <person name="Hata A."/>
            <person name="Tsuzuki T."/>
            <person name="Shimada K."/>
            <person name="Takiguchi M."/>
            <person name="Mori M."/>
            <person name="Matsuda I."/>
        </authorList>
    </citation>
    <scope>NUCLEOTIDE SEQUENCE [GENOMIC DNA]</scope>
    <scope>VARIANT LEU-101</scope>
    <source>
        <tissue>Liver</tissue>
    </source>
</reference>
<reference key="3">
    <citation type="journal article" date="2004" name="Nat. Genet.">
        <title>Complete sequencing and characterization of 21,243 full-length human cDNAs.</title>
        <authorList>
            <person name="Ota T."/>
            <person name="Suzuki Y."/>
            <person name="Nishikawa T."/>
            <person name="Otsuki T."/>
            <person name="Sugiyama T."/>
            <person name="Irie R."/>
            <person name="Wakamatsu A."/>
            <person name="Hayashi K."/>
            <person name="Sato H."/>
            <person name="Nagai K."/>
            <person name="Kimura K."/>
            <person name="Makita H."/>
            <person name="Sekine M."/>
            <person name="Obayashi M."/>
            <person name="Nishi T."/>
            <person name="Shibahara T."/>
            <person name="Tanaka T."/>
            <person name="Ishii S."/>
            <person name="Yamamoto J."/>
            <person name="Saito K."/>
            <person name="Kawai Y."/>
            <person name="Isono Y."/>
            <person name="Nakamura Y."/>
            <person name="Nagahari K."/>
            <person name="Murakami K."/>
            <person name="Yasuda T."/>
            <person name="Iwayanagi T."/>
            <person name="Wagatsuma M."/>
            <person name="Shiratori A."/>
            <person name="Sudo H."/>
            <person name="Hosoiri T."/>
            <person name="Kaku Y."/>
            <person name="Kodaira H."/>
            <person name="Kondo H."/>
            <person name="Sugawara M."/>
            <person name="Takahashi M."/>
            <person name="Kanda K."/>
            <person name="Yokoi T."/>
            <person name="Furuya T."/>
            <person name="Kikkawa E."/>
            <person name="Omura Y."/>
            <person name="Abe K."/>
            <person name="Kamihara K."/>
            <person name="Katsuta N."/>
            <person name="Sato K."/>
            <person name="Tanikawa M."/>
            <person name="Yamazaki M."/>
            <person name="Ninomiya K."/>
            <person name="Ishibashi T."/>
            <person name="Yamashita H."/>
            <person name="Murakawa K."/>
            <person name="Fujimori K."/>
            <person name="Tanai H."/>
            <person name="Kimata M."/>
            <person name="Watanabe M."/>
            <person name="Hiraoka S."/>
            <person name="Chiba Y."/>
            <person name="Ishida S."/>
            <person name="Ono Y."/>
            <person name="Takiguchi S."/>
            <person name="Watanabe S."/>
            <person name="Yosida M."/>
            <person name="Hotuta T."/>
            <person name="Kusano J."/>
            <person name="Kanehori K."/>
            <person name="Takahashi-Fujii A."/>
            <person name="Hara H."/>
            <person name="Tanase T.-O."/>
            <person name="Nomura Y."/>
            <person name="Togiya S."/>
            <person name="Komai F."/>
            <person name="Hara R."/>
            <person name="Takeuchi K."/>
            <person name="Arita M."/>
            <person name="Imose N."/>
            <person name="Musashino K."/>
            <person name="Yuuki H."/>
            <person name="Oshima A."/>
            <person name="Sasaki N."/>
            <person name="Aotsuka S."/>
            <person name="Yoshikawa Y."/>
            <person name="Matsunawa H."/>
            <person name="Ichihara T."/>
            <person name="Shiohata N."/>
            <person name="Sano S."/>
            <person name="Moriya S."/>
            <person name="Momiyama H."/>
            <person name="Satoh N."/>
            <person name="Takami S."/>
            <person name="Terashima Y."/>
            <person name="Suzuki O."/>
            <person name="Nakagawa S."/>
            <person name="Senoh A."/>
            <person name="Mizoguchi H."/>
            <person name="Goto Y."/>
            <person name="Shimizu F."/>
            <person name="Wakebe H."/>
            <person name="Hishigaki H."/>
            <person name="Watanabe T."/>
            <person name="Sugiyama A."/>
            <person name="Takemoto M."/>
            <person name="Kawakami B."/>
            <person name="Yamazaki M."/>
            <person name="Watanabe K."/>
            <person name="Kumagai A."/>
            <person name="Itakura S."/>
            <person name="Fukuzumi Y."/>
            <person name="Fujimori Y."/>
            <person name="Komiyama M."/>
            <person name="Tashiro H."/>
            <person name="Tanigami A."/>
            <person name="Fujiwara T."/>
            <person name="Ono T."/>
            <person name="Yamada K."/>
            <person name="Fujii Y."/>
            <person name="Ozaki K."/>
            <person name="Hirao M."/>
            <person name="Ohmori Y."/>
            <person name="Kawabata A."/>
            <person name="Hikiji T."/>
            <person name="Kobatake N."/>
            <person name="Inagaki H."/>
            <person name="Ikema Y."/>
            <person name="Okamoto S."/>
            <person name="Okitani R."/>
            <person name="Kawakami T."/>
            <person name="Noguchi S."/>
            <person name="Itoh T."/>
            <person name="Shigeta K."/>
            <person name="Senba T."/>
            <person name="Matsumura K."/>
            <person name="Nakajima Y."/>
            <person name="Mizuno T."/>
            <person name="Morinaga M."/>
            <person name="Sasaki M."/>
            <person name="Togashi T."/>
            <person name="Oyama M."/>
            <person name="Hata H."/>
            <person name="Watanabe M."/>
            <person name="Komatsu T."/>
            <person name="Mizushima-Sugano J."/>
            <person name="Satoh T."/>
            <person name="Shirai Y."/>
            <person name="Takahashi Y."/>
            <person name="Nakagawa K."/>
            <person name="Okumura K."/>
            <person name="Nagase T."/>
            <person name="Nomura N."/>
            <person name="Kikuchi H."/>
            <person name="Masuho Y."/>
            <person name="Yamashita R."/>
            <person name="Nakai K."/>
            <person name="Yada T."/>
            <person name="Nakamura Y."/>
            <person name="Ohara O."/>
            <person name="Isogai T."/>
            <person name="Sugano S."/>
        </authorList>
    </citation>
    <scope>NUCLEOTIDE SEQUENCE [LARGE SCALE MRNA]</scope>
    <source>
        <tissue>Liver</tissue>
    </source>
</reference>
<reference key="4">
    <citation type="journal article" date="2005" name="Nature">
        <title>The DNA sequence of the human X chromosome.</title>
        <authorList>
            <person name="Ross M.T."/>
            <person name="Grafham D.V."/>
            <person name="Coffey A.J."/>
            <person name="Scherer S."/>
            <person name="McLay K."/>
            <person name="Muzny D."/>
            <person name="Platzer M."/>
            <person name="Howell G.R."/>
            <person name="Burrows C."/>
            <person name="Bird C.P."/>
            <person name="Frankish A."/>
            <person name="Lovell F.L."/>
            <person name="Howe K.L."/>
            <person name="Ashurst J.L."/>
            <person name="Fulton R.S."/>
            <person name="Sudbrak R."/>
            <person name="Wen G."/>
            <person name="Jones M.C."/>
            <person name="Hurles M.E."/>
            <person name="Andrews T.D."/>
            <person name="Scott C.E."/>
            <person name="Searle S."/>
            <person name="Ramser J."/>
            <person name="Whittaker A."/>
            <person name="Deadman R."/>
            <person name="Carter N.P."/>
            <person name="Hunt S.E."/>
            <person name="Chen R."/>
            <person name="Cree A."/>
            <person name="Gunaratne P."/>
            <person name="Havlak P."/>
            <person name="Hodgson A."/>
            <person name="Metzker M.L."/>
            <person name="Richards S."/>
            <person name="Scott G."/>
            <person name="Steffen D."/>
            <person name="Sodergren E."/>
            <person name="Wheeler D.A."/>
            <person name="Worley K.C."/>
            <person name="Ainscough R."/>
            <person name="Ambrose K.D."/>
            <person name="Ansari-Lari M.A."/>
            <person name="Aradhya S."/>
            <person name="Ashwell R.I."/>
            <person name="Babbage A.K."/>
            <person name="Bagguley C.L."/>
            <person name="Ballabio A."/>
            <person name="Banerjee R."/>
            <person name="Barker G.E."/>
            <person name="Barlow K.F."/>
            <person name="Barrett I.P."/>
            <person name="Bates K.N."/>
            <person name="Beare D.M."/>
            <person name="Beasley H."/>
            <person name="Beasley O."/>
            <person name="Beck A."/>
            <person name="Bethel G."/>
            <person name="Blechschmidt K."/>
            <person name="Brady N."/>
            <person name="Bray-Allen S."/>
            <person name="Bridgeman A.M."/>
            <person name="Brown A.J."/>
            <person name="Brown M.J."/>
            <person name="Bonnin D."/>
            <person name="Bruford E.A."/>
            <person name="Buhay C."/>
            <person name="Burch P."/>
            <person name="Burford D."/>
            <person name="Burgess J."/>
            <person name="Burrill W."/>
            <person name="Burton J."/>
            <person name="Bye J.M."/>
            <person name="Carder C."/>
            <person name="Carrel L."/>
            <person name="Chako J."/>
            <person name="Chapman J.C."/>
            <person name="Chavez D."/>
            <person name="Chen E."/>
            <person name="Chen G."/>
            <person name="Chen Y."/>
            <person name="Chen Z."/>
            <person name="Chinault C."/>
            <person name="Ciccodicola A."/>
            <person name="Clark S.Y."/>
            <person name="Clarke G."/>
            <person name="Clee C.M."/>
            <person name="Clegg S."/>
            <person name="Clerc-Blankenburg K."/>
            <person name="Clifford K."/>
            <person name="Cobley V."/>
            <person name="Cole C.G."/>
            <person name="Conquer J.S."/>
            <person name="Corby N."/>
            <person name="Connor R.E."/>
            <person name="David R."/>
            <person name="Davies J."/>
            <person name="Davis C."/>
            <person name="Davis J."/>
            <person name="Delgado O."/>
            <person name="Deshazo D."/>
            <person name="Dhami P."/>
            <person name="Ding Y."/>
            <person name="Dinh H."/>
            <person name="Dodsworth S."/>
            <person name="Draper H."/>
            <person name="Dugan-Rocha S."/>
            <person name="Dunham A."/>
            <person name="Dunn M."/>
            <person name="Durbin K.J."/>
            <person name="Dutta I."/>
            <person name="Eades T."/>
            <person name="Ellwood M."/>
            <person name="Emery-Cohen A."/>
            <person name="Errington H."/>
            <person name="Evans K.L."/>
            <person name="Faulkner L."/>
            <person name="Francis F."/>
            <person name="Frankland J."/>
            <person name="Fraser A.E."/>
            <person name="Galgoczy P."/>
            <person name="Gilbert J."/>
            <person name="Gill R."/>
            <person name="Gloeckner G."/>
            <person name="Gregory S.G."/>
            <person name="Gribble S."/>
            <person name="Griffiths C."/>
            <person name="Grocock R."/>
            <person name="Gu Y."/>
            <person name="Gwilliam R."/>
            <person name="Hamilton C."/>
            <person name="Hart E.A."/>
            <person name="Hawes A."/>
            <person name="Heath P.D."/>
            <person name="Heitmann K."/>
            <person name="Hennig S."/>
            <person name="Hernandez J."/>
            <person name="Hinzmann B."/>
            <person name="Ho S."/>
            <person name="Hoffs M."/>
            <person name="Howden P.J."/>
            <person name="Huckle E.J."/>
            <person name="Hume J."/>
            <person name="Hunt P.J."/>
            <person name="Hunt A.R."/>
            <person name="Isherwood J."/>
            <person name="Jacob L."/>
            <person name="Johnson D."/>
            <person name="Jones S."/>
            <person name="de Jong P.J."/>
            <person name="Joseph S.S."/>
            <person name="Keenan S."/>
            <person name="Kelly S."/>
            <person name="Kershaw J.K."/>
            <person name="Khan Z."/>
            <person name="Kioschis P."/>
            <person name="Klages S."/>
            <person name="Knights A.J."/>
            <person name="Kosiura A."/>
            <person name="Kovar-Smith C."/>
            <person name="Laird G.K."/>
            <person name="Langford C."/>
            <person name="Lawlor S."/>
            <person name="Leversha M."/>
            <person name="Lewis L."/>
            <person name="Liu W."/>
            <person name="Lloyd C."/>
            <person name="Lloyd D.M."/>
            <person name="Loulseged H."/>
            <person name="Loveland J.E."/>
            <person name="Lovell J.D."/>
            <person name="Lozado R."/>
            <person name="Lu J."/>
            <person name="Lyne R."/>
            <person name="Ma J."/>
            <person name="Maheshwari M."/>
            <person name="Matthews L.H."/>
            <person name="McDowall J."/>
            <person name="McLaren S."/>
            <person name="McMurray A."/>
            <person name="Meidl P."/>
            <person name="Meitinger T."/>
            <person name="Milne S."/>
            <person name="Miner G."/>
            <person name="Mistry S.L."/>
            <person name="Morgan M."/>
            <person name="Morris S."/>
            <person name="Mueller I."/>
            <person name="Mullikin J.C."/>
            <person name="Nguyen N."/>
            <person name="Nordsiek G."/>
            <person name="Nyakatura G."/>
            <person name="O'dell C.N."/>
            <person name="Okwuonu G."/>
            <person name="Palmer S."/>
            <person name="Pandian R."/>
            <person name="Parker D."/>
            <person name="Parrish J."/>
            <person name="Pasternak S."/>
            <person name="Patel D."/>
            <person name="Pearce A.V."/>
            <person name="Pearson D.M."/>
            <person name="Pelan S.E."/>
            <person name="Perez L."/>
            <person name="Porter K.M."/>
            <person name="Ramsey Y."/>
            <person name="Reichwald K."/>
            <person name="Rhodes S."/>
            <person name="Ridler K.A."/>
            <person name="Schlessinger D."/>
            <person name="Schueler M.G."/>
            <person name="Sehra H.K."/>
            <person name="Shaw-Smith C."/>
            <person name="Shen H."/>
            <person name="Sheridan E.M."/>
            <person name="Shownkeen R."/>
            <person name="Skuce C.D."/>
            <person name="Smith M.L."/>
            <person name="Sotheran E.C."/>
            <person name="Steingruber H.E."/>
            <person name="Steward C.A."/>
            <person name="Storey R."/>
            <person name="Swann R.M."/>
            <person name="Swarbreck D."/>
            <person name="Tabor P.E."/>
            <person name="Taudien S."/>
            <person name="Taylor T."/>
            <person name="Teague B."/>
            <person name="Thomas K."/>
            <person name="Thorpe A."/>
            <person name="Timms K."/>
            <person name="Tracey A."/>
            <person name="Trevanion S."/>
            <person name="Tromans A.C."/>
            <person name="d'Urso M."/>
            <person name="Verduzco D."/>
            <person name="Villasana D."/>
            <person name="Waldron L."/>
            <person name="Wall M."/>
            <person name="Wang Q."/>
            <person name="Warren J."/>
            <person name="Warry G.L."/>
            <person name="Wei X."/>
            <person name="West A."/>
            <person name="Whitehead S.L."/>
            <person name="Whiteley M.N."/>
            <person name="Wilkinson J.E."/>
            <person name="Willey D.L."/>
            <person name="Williams G."/>
            <person name="Williams L."/>
            <person name="Williamson A."/>
            <person name="Williamson H."/>
            <person name="Wilming L."/>
            <person name="Woodmansey R.L."/>
            <person name="Wray P.W."/>
            <person name="Yen J."/>
            <person name="Zhang J."/>
            <person name="Zhou J."/>
            <person name="Zoghbi H."/>
            <person name="Zorilla S."/>
            <person name="Buck D."/>
            <person name="Reinhardt R."/>
            <person name="Poustka A."/>
            <person name="Rosenthal A."/>
            <person name="Lehrach H."/>
            <person name="Meindl A."/>
            <person name="Minx P.J."/>
            <person name="Hillier L.W."/>
            <person name="Willard H.F."/>
            <person name="Wilson R.K."/>
            <person name="Waterston R.H."/>
            <person name="Rice C.M."/>
            <person name="Vaudin M."/>
            <person name="Coulson A."/>
            <person name="Nelson D.L."/>
            <person name="Weinstock G."/>
            <person name="Sulston J.E."/>
            <person name="Durbin R.M."/>
            <person name="Hubbard T."/>
            <person name="Gibbs R.A."/>
            <person name="Beck S."/>
            <person name="Rogers J."/>
            <person name="Bentley D.R."/>
        </authorList>
    </citation>
    <scope>NUCLEOTIDE SEQUENCE [LARGE SCALE GENOMIC DNA]</scope>
</reference>
<reference key="5">
    <citation type="submission" date="2005-09" db="EMBL/GenBank/DDBJ databases">
        <authorList>
            <person name="Mural R.J."/>
            <person name="Istrail S."/>
            <person name="Sutton G.G."/>
            <person name="Florea L."/>
            <person name="Halpern A.L."/>
            <person name="Mobarry C.M."/>
            <person name="Lippert R."/>
            <person name="Walenz B."/>
            <person name="Shatkay H."/>
            <person name="Dew I."/>
            <person name="Miller J.R."/>
            <person name="Flanigan M.J."/>
            <person name="Edwards N.J."/>
            <person name="Bolanos R."/>
            <person name="Fasulo D."/>
            <person name="Halldorsson B.V."/>
            <person name="Hannenhalli S."/>
            <person name="Turner R."/>
            <person name="Yooseph S."/>
            <person name="Lu F."/>
            <person name="Nusskern D.R."/>
            <person name="Shue B.C."/>
            <person name="Zheng X.H."/>
            <person name="Zhong F."/>
            <person name="Delcher A.L."/>
            <person name="Huson D.H."/>
            <person name="Kravitz S.A."/>
            <person name="Mouchard L."/>
            <person name="Reinert K."/>
            <person name="Remington K.A."/>
            <person name="Clark A.G."/>
            <person name="Waterman M.S."/>
            <person name="Eichler E.E."/>
            <person name="Adams M.D."/>
            <person name="Hunkapiller M.W."/>
            <person name="Myers E.W."/>
            <person name="Venter J.C."/>
        </authorList>
    </citation>
    <scope>NUCLEOTIDE SEQUENCE [LARGE SCALE GENOMIC DNA]</scope>
</reference>
<reference key="6">
    <citation type="journal article" date="2004" name="Genome Res.">
        <title>The status, quality, and expansion of the NIH full-length cDNA project: the Mammalian Gene Collection (MGC).</title>
        <authorList>
            <consortium name="The MGC Project Team"/>
        </authorList>
    </citation>
    <scope>NUCLEOTIDE SEQUENCE [LARGE SCALE MRNA]</scope>
    <scope>VARIANT ARG-46</scope>
    <source>
        <tissue>Brain</tissue>
    </source>
</reference>
<reference key="7">
    <citation type="journal article" date="1985" name="Proc. Natl. Acad. Sci. U.S.A.">
        <title>Arginine in the leader peptide is required for both import and proteolytic cleavage of a mitochondrial precursor.</title>
        <authorList>
            <person name="Horwich A.L."/>
            <person name="Kalousek F."/>
            <person name="Rosenberg L.E."/>
        </authorList>
    </citation>
    <scope>NUCLEOTIDE SEQUENCE [GENOMIC DNA] OF 1-36</scope>
    <scope>SUBCELLULAR LOCATION</scope>
    <scope>MUTAGENESIS OF ARG-15; ARG-23 AND ARG-26</scope>
</reference>
<reference key="8">
    <citation type="journal article" date="1986" name="J. Biochem.">
        <title>Isolation and characterization of the human ornithine transcarbamylase gene: structure of the 5'-end region.</title>
        <authorList>
            <person name="Hata A."/>
            <person name="Tsuzuki T."/>
            <person name="Shimada K."/>
            <person name="Takiguchi M."/>
            <person name="Mori M."/>
            <person name="Matsuda I."/>
        </authorList>
    </citation>
    <scope>NUCLEOTIDE SEQUENCE [GENOMIC DNA] OF 1-26</scope>
</reference>
<reference key="9">
    <citation type="journal article" date="1994" name="Hum. Mol. Genet.">
        <title>A novel arginine (245) to glutamine change in exon 8 of the ornithine carbamoyl transferase gene in two unrelated children presenting with late onset deficiency and showing the same enzymatic pattern.</title>
        <authorList>
            <person name="Gilbert-Dussardier B."/>
            <person name="Rabier D."/>
            <person name="Strautnieks S."/>
            <person name="Segues B."/>
            <person name="Bonnefont J.-P."/>
            <person name="Munnich A."/>
        </authorList>
    </citation>
    <scope>NUCLEOTIDE SEQUENCE [GENOMIC DNA] OF 269-289</scope>
    <scope>VARIANT OTCD GLN-277</scope>
</reference>
<reference key="10">
    <citation type="journal article" date="2014" name="J. Proteomics">
        <title>An enzyme assisted RP-RPLC approach for in-depth analysis of human liver phosphoproteome.</title>
        <authorList>
            <person name="Bian Y."/>
            <person name="Song C."/>
            <person name="Cheng K."/>
            <person name="Dong M."/>
            <person name="Wang F."/>
            <person name="Huang J."/>
            <person name="Sun D."/>
            <person name="Wang L."/>
            <person name="Ye M."/>
            <person name="Zou H."/>
        </authorList>
    </citation>
    <scope>PHOSPHORYLATION [LARGE SCALE ANALYSIS] AT SER-133</scope>
    <scope>IDENTIFICATION BY MASS SPECTROMETRY [LARGE SCALE ANALYSIS]</scope>
    <source>
        <tissue>Liver</tissue>
    </source>
</reference>
<reference key="11">
    <citation type="journal article" date="1994" name="Hum. Genet.">
        <title>Expression of four mutant human ornithine transcarbamylase genes in cultured Cos 1 cells relates to clinical phenotypes.</title>
        <authorList>
            <person name="Matsuura T."/>
            <person name="Hoshide R."/>
            <person name="Setoyama C."/>
            <person name="Komaki S."/>
            <person name="Kiwaki K."/>
            <person name="Endo F."/>
            <person name="Nishikawa S."/>
            <person name="Matsuda I."/>
        </authorList>
    </citation>
    <scope>CHARACTERIZATION OF VARIANTS OTCD ARG-195; VAL-196 AND ALA-264</scope>
    <scope>FUNCTION</scope>
    <scope>CATALYTIC ACTIVITY</scope>
</reference>
<reference key="12">
    <citation type="journal article" date="2009" name="J. Biol. Chem.">
        <title>Lysine 88 acetylation negatively regulates ornithine carbamoyltransferase activity in response to nutrient signals.</title>
        <authorList>
            <person name="Yu W."/>
            <person name="Lin Y."/>
            <person name="Yao J."/>
            <person name="Huang W."/>
            <person name="Lei Q."/>
            <person name="Xiong Y."/>
            <person name="Zhao S."/>
            <person name="Guan K.L."/>
        </authorList>
    </citation>
    <scope>ACETYLATION AT LYS-88</scope>
    <scope>ACTIVITY REGULATION</scope>
</reference>
<reference evidence="49" key="13">
    <citation type="journal article" date="1998" name="J. Biol. Chem.">
        <title>1.85-A resolution crystal structure of human ornithine transcarbamoylase complexed with N-phosphonacetyl-L-ornithine. Catalytic mechanism and correlation with inherited deficiency.</title>
        <authorList>
            <person name="Shi D."/>
            <person name="Morizono H."/>
            <person name="Ha Y."/>
            <person name="Aoyagi M."/>
            <person name="Tuchman M."/>
            <person name="Allewell N.M."/>
        </authorList>
    </citation>
    <scope>X-RAY CRYSTALLOGRAPHY (1.85 ANGSTROMS) IN COMPLEX WITH SUBSTRATE ANALOG N-(PHOSPHONOACETYL)-L-ORNITHINE</scope>
</reference>
<reference evidence="48" key="14">
    <citation type="journal article" date="2000" name="Proteins">
        <title>Crystal structure of human ornithine transcarbamylase complexed with carbamoyl phosphate and L-norvaline at 1.9 A resolution.</title>
        <authorList>
            <person name="Shi D."/>
            <person name="Morizono H."/>
            <person name="Aoyagi M."/>
            <person name="Tuchman M."/>
            <person name="Allewell N.M."/>
        </authorList>
    </citation>
    <scope>X-RAY CRYSTALLOGRAPHY (1.9 ANGSTROMS) IN COMPLEX WITH L-2-AMINOPENTANOATE AND CARBAMOYL PHOSPHATE</scope>
    <scope>ACTIVE SITE</scope>
    <scope>REACTION MECHANISM</scope>
</reference>
<reference key="15">
    <citation type="journal article" date="1993" name="Hum. Mutat.">
        <title>Mutations and polymorphisms in the human ornithine transcarbamylase gene.</title>
        <authorList>
            <person name="Tuchman M."/>
        </authorList>
    </citation>
    <scope>REVIEW ON VARIANTS</scope>
</reference>
<reference key="16">
    <citation type="journal article" date="1995" name="Hum. Mutat.">
        <title>Mutations and polymorphisms in the human ornithine transcarbamylase gene: mutation update addendum.</title>
        <authorList>
            <person name="Tuchman M."/>
            <person name="Plante R.J."/>
        </authorList>
    </citation>
    <scope>REVIEW ON VARIANTS</scope>
</reference>
<reference key="17">
    <citation type="journal article" date="1995" name="J. Med. Genet.">
        <title>The molecular basis of ornithine transcarbamylase deficiency: modelling the human enzyme and the effects of mutations.</title>
        <authorList>
            <person name="Tuchman M."/>
            <person name="Morizono H."/>
            <person name="Reish O."/>
            <person name="Yuan X."/>
            <person name="Allewell N.M."/>
        </authorList>
    </citation>
    <scope>REVIEW ON VARIANTS</scope>
    <scope>3D-STRUCTURE MODELING</scope>
</reference>
<reference key="18">
    <citation type="journal article" date="1988" name="J. Clin. Invest.">
        <title>Characterization of point mutations in the same arginine codon in three unrelated patients with ornithine transcarbamylase deficiency.</title>
        <authorList>
            <person name="Maddalena A."/>
            <person name="Spence J.E."/>
            <person name="O'Brien W.E."/>
            <person name="Nussbaum R.L."/>
        </authorList>
    </citation>
    <scope>VARIANT OTCD GLN-141</scope>
</reference>
<reference key="19">
    <citation type="journal article" date="1989" name="J. Clin. Invest.">
        <title>An arginine to glutamine mutation in residue 109 of human ornithine transcarbamylase completely abolishes enzymatic activity in Cos1 cells.</title>
        <authorList>
            <person name="Lee J.T."/>
            <person name="Nussbaum R.L."/>
        </authorList>
    </citation>
    <scope>VARIANT OTCD GLN-141</scope>
    <scope>CHARACTERIZATION OF VARIANT OTCD GLN-141</scope>
    <scope>FUNCTION</scope>
    <scope>CATALYTIC ACTIVITY</scope>
    <scope>PATHWAY</scope>
</reference>
<reference key="20">
    <citation type="journal article" date="1989" name="Proc. Natl. Acad. Sci. U.S.A.">
        <title>Scanning detection of mutations in human ornithine transcarbamoylase by chemical mismatch cleavage.</title>
        <authorList>
            <person name="Grompe M."/>
            <person name="Muzny D.M."/>
            <person name="Caskey C.T."/>
        </authorList>
    </citation>
    <scope>VARIANTS OTCD GLN-26; PRO-45 AND GLU-216</scope>
    <scope>VARIANT ARG-46</scope>
</reference>
<reference key="21">
    <citation type="journal article" date="1990" name="Genomics">
        <title>Use of denaturing gradient gel electrophoresis for detection of mutation and prospective diagnosis in late onset ornithine transcarbamylase deficiency.</title>
        <authorList>
            <person name="Finkelstein J.E."/>
            <person name="Francomano C.A."/>
            <person name="Brusilow S.W."/>
            <person name="Traystman M.D."/>
        </authorList>
    </citation>
    <scope>VARIANT OTCD TRP-277</scope>
</reference>
<reference key="22">
    <citation type="journal article" date="1991" name="Am. J. Hum. Genet.">
        <title>Improved molecular diagnostics for ornithine transcarbamylase deficiency.</title>
        <authorList>
            <person name="Grompe M."/>
            <person name="Caskey C.T."/>
            <person name="Fenwick R.G. Jr."/>
        </authorList>
    </citation>
    <scope>VARIANTS OTCD GLN-92 AND LEU-320</scope>
    <scope>VARIANT PRO-111</scope>
</reference>
<reference key="23">
    <citation type="journal article" date="1991" name="Hum. Genet.">
        <title>Fatal hyperammonemia resulting from a C-to-T mutation at a MspI site of the ornithine transcarbamylase gene.</title>
        <authorList>
            <person name="Hentzen D."/>
            <person name="Pelet A."/>
            <person name="Feldman D."/>
            <person name="Rabier D."/>
            <person name="Berthelot J."/>
            <person name="Munnich A."/>
        </authorList>
    </citation>
    <scope>VARIANT OTCD LEU-225</scope>
</reference>
<reference key="24">
    <citation type="journal article" date="1992" name="Pediatr. Res.">
        <title>Six new mutations in the ornithine transcarbamylase gene detected by single-strand conformational polymorphism.</title>
        <authorList>
            <person name="Tuchman M."/>
            <person name="Holzknecht R.A."/>
            <person name="Gueron A.B."/>
            <person name="Berry S.A."/>
            <person name="Tsai M.Y."/>
        </authorList>
    </citation>
    <scope>VARIANTS OTCD GLU-79; THR-94; PHE-304 AND ASP-345</scope>
</reference>
<reference key="25">
    <citation type="journal article" date="1993" name="Hum. Genet.">
        <title>Single-strand conformational polymorphism and direct sequencing applied to carrier testing in families with ornithine transcarbamylase deficiency.</title>
        <authorList>
            <person name="Tsai M.Y."/>
            <person name="Holzknecht R.A."/>
            <person name="Tuchman M."/>
        </authorList>
    </citation>
    <scope>VARIANT OTCD PRO-140</scope>
</reference>
<reference key="26">
    <citation type="journal article" date="1994" name="Hum. Mutat.">
        <title>The ornithine transcarbamylase gene: new 'private' mutations in four patients and study of a polymorphism.</title>
        <authorList>
            <person name="Tuchman M."/>
            <person name="Plante R.J."/>
            <person name="Giguere Y."/>
            <person name="Lemieux B."/>
        </authorList>
    </citation>
    <scope>VARIANTS OTCD LEU-117; LEU-182 AND CYS-203</scope>
</reference>
<reference key="27">
    <citation type="journal article" date="1994" name="Hum. Mutat.">
        <title>Four newly identified ornithine transcarbamylase (OTC) mutations (D126G, R129H, I172M and W332X) in Japanese male patients with early-onset OTC deficiency.</title>
        <authorList>
            <person name="Matsuura T."/>
            <person name="Hoshide R."/>
            <person name="Kiwaki K."/>
            <person name="Komaki S."/>
            <person name="Koike E."/>
            <person name="Endo F."/>
            <person name="Oyanagi K."/>
            <person name="Suzuki Y."/>
            <person name="Kato I."/>
            <person name="Ishikawa K."/>
            <person name="Yoda H."/>
            <person name="Kamitani S."/>
            <person name="Sakaki Y."/>
            <person name="Matsuda I."/>
        </authorList>
    </citation>
    <scope>VARIANTS OTCD GLY-126; HIS-129 AND MET-172</scope>
</reference>
<reference key="28">
    <citation type="journal article" date="1994" name="Hum. Mutat.">
        <title>Seven new mutations in the human ornithine transcarbamylase gene.</title>
        <authorList>
            <person name="Tuchman M."/>
            <person name="Plante R.J."/>
            <person name="McCann M.T."/>
            <person name="Qureshi A.A."/>
        </authorList>
    </citation>
    <scope>VARIANTS OTCD HIS-40; HIS-129; ARG-195; THR-225; GLN-277 AND GLU-309 DEL</scope>
</reference>
<reference key="29">
    <citation type="journal article" date="1995" name="Hum. Genet.">
        <title>A splicing mutation, a nonsense mutation (Y167X) and two missense mutations (I159T and A209V) in Spanish patients with ornithine transcarbamylase deficiency.</title>
        <authorList>
            <person name="Garcia-Perez M.A."/>
            <person name="Sanjurjo P."/>
            <person name="Briones P."/>
            <person name="Garcia-Munoz M.J."/>
            <person name="Rubio V."/>
        </authorList>
    </citation>
    <scope>VARIANTS OTCD THR-159 AND VAL-209</scope>
</reference>
<reference key="30">
    <citation type="journal article" date="1995" name="J. Inherit. Metab. Dis.">
        <title>A novel point mutation at codon 269 of the ornithine transcarbamylase (OTC) gene causing neonatal onset of OTC deficiency.</title>
        <authorList>
            <person name="Zimmer K.P."/>
            <person name="Matsuura T."/>
            <person name="Colombo J.-P."/>
            <person name="Koch H.G."/>
            <person name="Ullrich K."/>
            <person name="Deufel T."/>
            <person name="Harms E."/>
            <person name="Matsuda I."/>
        </authorList>
    </citation>
    <scope>VARIANT OTCD GLU-269</scope>
</reference>
<reference key="31">
    <citation type="journal article" date="1996" name="Hum. Mutat.">
        <title>Partial duplication [dup. TCAC (178)] and novel point mutations (T125M, G188R, A209V, and H302L) of the ornithine transcarbamylase gene in congenital hyperammonemia.</title>
        <authorList>
            <person name="Gilbert-Dussardier B."/>
            <person name="Segues B."/>
            <person name="Rozet J.-M."/>
            <person name="Rabier D."/>
            <person name="Calvas P."/>
            <person name="de Lumley L."/>
            <person name="Bonnefont J.-P."/>
            <person name="Munnich A."/>
        </authorList>
    </citation>
    <scope>VARIANTS OTCD MET-125; ARG-188; VAL-209 AND LEU-302</scope>
</reference>
<reference key="32">
    <citation type="journal article" date="1996" name="Enzyme Protein">
        <title>Genotype-phenotype correlations in ornithine transcarbamylase deficiency.</title>
        <authorList>
            <person name="Guardamagna O."/>
            <person name="Gatti E."/>
            <person name="Parini R."/>
            <person name="Plante R.J."/>
            <person name="Tuchman M."/>
        </authorList>
    </citation>
    <scope>VARIANTS OTCD HIS-40; ASN-88; TYR-202 AND ASN-263</scope>
</reference>
<reference key="33">
    <citation type="journal article" date="1996" name="Hum. Mutat.">
        <title>Ornithine transcarbamylase deficiency: characterization of gene mutations and polymorphisms.</title>
        <authorList>
            <person name="Leibundgut E.O."/>
            <person name="Wermuth B."/>
            <person name="Colombo J.-P."/>
            <person name="Liechti-Gallati S."/>
        </authorList>
    </citation>
    <scope>VARIANTS OTCD ASN-88; CYS-176; ALA-220; TYR-302 AND LYS-343</scope>
</reference>
<reference key="34">
    <citation type="journal article" date="1996" name="Hum. Mutat.">
        <title>A 3-base pair in-frame deletion in exon 8 (delGlu272/273) of the ornithine transcarbamylase gene in late-onset hyperammonemic coma.</title>
        <authorList>
            <person name="Segues B."/>
            <person name="Saugier Veber P."/>
            <person name="Rabier D."/>
            <person name="Calvas P."/>
            <person name="Saudubray J.-M."/>
            <person name="Gilbert-Dussardier B."/>
            <person name="Bonnefont J.-P."/>
            <person name="Munnich A."/>
        </authorList>
    </citation>
    <scope>VARIANT OTCD GLU-272 DEL</scope>
</reference>
<reference key="35">
    <citation type="journal article" date="1996" name="J. Inherit. Metab. Dis.">
        <title>Identification of new mutations in the ornithine transcarbamylase (OTC) gene in Korean families.</title>
        <authorList>
            <person name="Yoo H.-W."/>
            <person name="Kim G.-H."/>
            <person name="Lee D.-H."/>
        </authorList>
    </citation>
    <scope>VARIANTS OTCD ILE-44; GLN-141 AND TYR-214</scope>
    <scope>VARIANT LEU-101</scope>
</reference>
<reference key="36">
    <citation type="journal article" date="1997" name="Am. J. Med. Genet.">
        <title>The ornithine transcarbamylase (OTC) gene: mutations in 50 Japanese families with OTC deficiency.</title>
        <authorList>
            <person name="Matsuda I."/>
            <person name="Tanase S."/>
        </authorList>
    </citation>
    <scope>VARIANTS OTCD</scope>
</reference>
<reference key="37">
    <citation type="journal article" date="1997" name="Biochem. J.">
        <title>Expression, purification and kinetic characterization of wild-type human ornithine transcarbamylase and a recurrent mutant that produces 'late onset' hyperammonaemia.</title>
        <authorList>
            <person name="Morizono H."/>
            <person name="Tuchman M."/>
            <person name="Rajagopal B.S."/>
            <person name="McCann M.T."/>
            <person name="Listrom C.D."/>
            <person name="Yuan X."/>
            <person name="Venugopal D."/>
            <person name="Barany G."/>
            <person name="Allewell N.M."/>
        </authorList>
    </citation>
    <scope>CHARACTERIZATION OF VARIANT OTCD TRP-277</scope>
</reference>
<reference key="38">
    <citation type="journal article" date="1997" name="Hum. Mutat.">
        <title>Ornithine transcarbamylase deficiency: ten new mutations and high proportion of de novo mutations in heterozygous females.</title>
        <authorList>
            <person name="Oppliger Leibundgut E."/>
            <person name="Liechti-Gallati S."/>
            <person name="Colombo J.-P."/>
            <person name="Wermuth B."/>
        </authorList>
    </citation>
    <scope>VARIANTS OTCD PRO-63; ASP-100; ASP-183; LYS-213 AND PRO-340</scope>
    <scope>VARIANT PHE-43</scope>
</reference>
<reference key="39">
    <citation type="journal article" date="1997" name="J. Inherit. Metab. Dis.">
        <title>Identification of 'private' mutations in patients with ornithine transcarbamylase deficiency.</title>
        <authorList>
            <person name="Tuchman M."/>
            <person name="Morizono H."/>
            <person name="Rajagopal B.S."/>
            <person name="Plante R.J."/>
            <person name="Allewell N.M."/>
        </authorList>
    </citation>
    <scope>VARIANTS OTCD</scope>
</reference>
<reference key="40">
    <citation type="journal article" date="1998" name="Hum. Mutat. Suppl.">
        <title>Ten novel mutations of the ornithine transcarbamylase (OTC) gene in OTC deficiency.</title>
        <authorList>
            <person name="Shimadzu M."/>
            <person name="Matsumoto H."/>
            <person name="Matsuura T."/>
            <person name="Kobayashi K."/>
            <person name="Komaki S."/>
            <person name="Kiwaki K."/>
            <person name="Hoshide R."/>
            <person name="Endo F."/>
            <person name="Saheki T."/>
            <person name="Matsuda I."/>
        </authorList>
    </citation>
    <scope>VARIANTS OTCD 178-THR-LEU-179 DEL; HIS-180; PRO-201; ARG-207; ILE-264 AND ARG-267</scope>
</reference>
<reference key="41">
    <citation type="journal article" date="1998" name="Hum. Mutat. Suppl.">
        <title>Novel intragenic deletions and point mutations of the ornithine transcarbamylase gene in congenital hyperammonemia.</title>
        <authorList>
            <person name="Calvas P."/>
            <person name="Seques B."/>
            <person name="Rozet J.-M."/>
            <person name="Rabier D."/>
            <person name="Bonnefont J.-P."/>
            <person name="Munnich A."/>
        </authorList>
    </citation>
    <scope>VARIANTS OTCD CYS-39; GLN-244 AND ARG-303</scope>
</reference>
<reference key="42">
    <citation type="journal article" date="1998" name="Hum. Mutat. Suppl.">
        <title>Y55D mutation in ornithine transcarbamylase associated with late-onset hyperammonemia in a male.</title>
        <authorList>
            <person name="Nishiyori A."/>
            <person name="Yoshino M."/>
            <person name="Tananari Y."/>
            <person name="Matsuura T."/>
            <person name="Hoshide R."/>
            <person name="Matsuda I."/>
            <person name="Mori M."/>
            <person name="Kato H."/>
        </authorList>
    </citation>
    <scope>VARIANT OTCD ASP-55</scope>
</reference>
<reference key="43">
    <citation type="journal article" date="1998" name="Hum. Mutat.">
        <title>A novel missense mutation in the human ornithine transcarbamylase gene.</title>
        <authorList>
            <person name="Bartholomew D.W."/>
            <person name="McClellan J."/>
        </authorList>
    </citation>
    <scope>VARIANT OTCD ASP-83</scope>
</reference>
<reference key="44">
    <citation type="journal article" date="1999" name="Hum. Mutat.">
        <title>Identification of a cytogenetic deletion and of four novel mutations (Q69X, I172F, G188V, G197R) affecting the gene for ornithine transcarbamylase (OTC) in Spanish patients with OTC deficiency.</title>
        <authorList>
            <person name="Climent C."/>
            <person name="Garcia-Perez M.A."/>
            <person name="Sanjurjo P."/>
            <person name="Ruiz-Sanz J.-I."/>
            <person name="Vilaseca M.A."/>
            <person name="Pineda M."/>
            <person name="Campistol J."/>
            <person name="Rubio V."/>
        </authorList>
    </citation>
    <scope>VARIANTS OTCD PHE-172; VAL-188 AND ARG-197</scope>
</reference>
<reference key="45">
    <citation type="journal article" date="1999" name="J. Inherit. Metab. Dis.">
        <title>Three novel and one recurrent ornithine carbamoyltransferase gene mutations in Polish patients.</title>
        <authorList>
            <person name="Popowska E."/>
            <person name="Ciara E."/>
            <person name="Rokicki D."/>
            <person name="Pronicka E."/>
        </authorList>
    </citation>
    <scope>VARIANTS OTCD LYS-198; VAL-209 AND LYS-326</scope>
    <scope>VARIANT ARG-270</scope>
</reference>
<reference key="46">
    <citation type="journal article" date="2000" name="Hum. Mutat.">
        <title>Lymphocyte mRNA analysis of the ornithine transcarbamylase gene in Italian OTCD male patients and manifesting carriers: identification of novel mutations.</title>
        <authorList>
            <person name="Giorgi M."/>
            <person name="Morrone A."/>
            <person name="Donati M.A."/>
            <person name="Ciani F."/>
            <person name="Bardelli T."/>
            <person name="Biasucci G."/>
            <person name="Zammarchi E."/>
        </authorList>
    </citation>
    <scope>VARIANTS OTCD LYS-262; ALA-264 AND LEU-265</scope>
</reference>
<reference key="47">
    <citation type="journal article" date="2002" name="Hum. Mutat.">
        <title>Identification of seven novel missense mutations, two splice-site mutations, two microdeletions and a polymorphic amino acid substitution in the gene for ornithine transcarbamylase (OTC) in patients with OTC deficiency.</title>
        <authorList>
            <person name="Climent C."/>
            <person name="Rubio V."/>
        </authorList>
    </citation>
    <scope>VARIANTS OTCD SER-160; PHE-191; ILE-206; PHE-301; HIS-305 AND PRO-341</scope>
    <scope>VARIANT ALA-333</scope>
</reference>
<reference key="48">
    <citation type="journal article" date="2006" name="Science">
        <title>The consensus coding sequences of human breast and colorectal cancers.</title>
        <authorList>
            <person name="Sjoeblom T."/>
            <person name="Jones S."/>
            <person name="Wood L.D."/>
            <person name="Parsons D.W."/>
            <person name="Lin J."/>
            <person name="Barber T.D."/>
            <person name="Mandelker D."/>
            <person name="Leary R.J."/>
            <person name="Ptak J."/>
            <person name="Silliman N."/>
            <person name="Szabo S."/>
            <person name="Buckhaults P."/>
            <person name="Farrell C."/>
            <person name="Meeh P."/>
            <person name="Markowitz S.D."/>
            <person name="Willis J."/>
            <person name="Dawson D."/>
            <person name="Willson J.K.V."/>
            <person name="Gazdar A.F."/>
            <person name="Hartigan J."/>
            <person name="Wu L."/>
            <person name="Liu C."/>
            <person name="Parmigiani G."/>
            <person name="Park B.H."/>
            <person name="Bachman K.E."/>
            <person name="Papadopoulos N."/>
            <person name="Vogelstein B."/>
            <person name="Kinzler K.W."/>
            <person name="Velculescu V.E."/>
        </authorList>
    </citation>
    <scope>VARIANT [LARGE SCALE ANALYSIS] ARG-270</scope>
</reference>